<dbReference type="EC" id="7.6.2.5" evidence="9 10"/>
<dbReference type="EMBL" id="AB039371">
    <property type="protein sequence ID" value="BAA96733.1"/>
    <property type="molecule type" value="Genomic_DNA"/>
</dbReference>
<dbReference type="EMBL" id="AF076775">
    <property type="protein sequence ID" value="AAF75107.1"/>
    <property type="molecule type" value="mRNA"/>
</dbReference>
<dbReference type="EMBL" id="AF308472">
    <property type="protein sequence ID" value="AAG33617.1"/>
    <property type="status" value="ALT_INIT"/>
    <property type="molecule type" value="mRNA"/>
</dbReference>
<dbReference type="EMBL" id="AF308473">
    <property type="protein sequence ID" value="AAG33618.1"/>
    <property type="status" value="ALT_INIT"/>
    <property type="molecule type" value="Genomic_DNA"/>
</dbReference>
<dbReference type="EMBL" id="AJ289233">
    <property type="protein sequence ID" value="CAB95766.2"/>
    <property type="molecule type" value="mRNA"/>
</dbReference>
<dbReference type="EMBL" id="AK057026">
    <property type="protein sequence ID" value="BAB71347.1"/>
    <property type="status" value="ALT_SEQ"/>
    <property type="molecule type" value="mRNA"/>
</dbReference>
<dbReference type="EMBL" id="AK172812">
    <property type="protein sequence ID" value="BAD18782.1"/>
    <property type="status" value="ALT_SEQ"/>
    <property type="molecule type" value="mRNA"/>
</dbReference>
<dbReference type="EMBL" id="AB209054">
    <property type="protein sequence ID" value="BAD92291.1"/>
    <property type="status" value="ALT_SEQ"/>
    <property type="molecule type" value="mRNA"/>
</dbReference>
<dbReference type="EMBL" id="BC000559">
    <property type="protein sequence ID" value="AAH00559.1"/>
    <property type="molecule type" value="mRNA"/>
</dbReference>
<dbReference type="EMBL" id="BC043423">
    <property type="protein sequence ID" value="AAH43423.1"/>
    <property type="status" value="ALT_SEQ"/>
    <property type="molecule type" value="mRNA"/>
</dbReference>
<dbReference type="EMBL" id="AF070598">
    <property type="protein sequence ID" value="AAC28653.1"/>
    <property type="molecule type" value="mRNA"/>
</dbReference>
<dbReference type="CCDS" id="CCDS2436.1">
    <molecule id="Q9NP58-1"/>
</dbReference>
<dbReference type="CCDS" id="CCDS86920.1">
    <molecule id="Q9NP58-4"/>
</dbReference>
<dbReference type="RefSeq" id="NP_001336757.1">
    <molecule id="Q9NP58-4"/>
    <property type="nucleotide sequence ID" value="NM_001349828.2"/>
</dbReference>
<dbReference type="RefSeq" id="NP_005680.1">
    <molecule id="Q9NP58-1"/>
    <property type="nucleotide sequence ID" value="NM_005689.4"/>
</dbReference>
<dbReference type="PDB" id="3NH6">
    <property type="method" value="X-ray"/>
    <property type="resolution" value="2.00 A"/>
    <property type="chains" value="A=558-842"/>
</dbReference>
<dbReference type="PDB" id="3NH9">
    <property type="method" value="X-ray"/>
    <property type="resolution" value="2.10 A"/>
    <property type="chains" value="A=558-842"/>
</dbReference>
<dbReference type="PDB" id="3NHA">
    <property type="method" value="X-ray"/>
    <property type="resolution" value="2.10 A"/>
    <property type="chains" value="A=558-842"/>
</dbReference>
<dbReference type="PDB" id="3NHB">
    <property type="method" value="X-ray"/>
    <property type="resolution" value="2.15 A"/>
    <property type="chains" value="A=558-842"/>
</dbReference>
<dbReference type="PDB" id="7D7N">
    <property type="method" value="EM"/>
    <property type="resolution" value="5.20 A"/>
    <property type="chains" value="A/B=1-842"/>
</dbReference>
<dbReference type="PDB" id="7D7R">
    <property type="method" value="EM"/>
    <property type="resolution" value="4.00 A"/>
    <property type="chains" value="A/B=1-842"/>
</dbReference>
<dbReference type="PDB" id="7DNY">
    <property type="method" value="EM"/>
    <property type="resolution" value="3.40 A"/>
    <property type="chains" value="A/B=1-842"/>
</dbReference>
<dbReference type="PDB" id="7DNZ">
    <property type="method" value="EM"/>
    <property type="resolution" value="3.60 A"/>
    <property type="chains" value="A/B=1-842"/>
</dbReference>
<dbReference type="PDB" id="7EKL">
    <property type="method" value="EM"/>
    <property type="resolution" value="3.50 A"/>
    <property type="chains" value="A/B=1-842"/>
</dbReference>
<dbReference type="PDB" id="7EKM">
    <property type="method" value="EM"/>
    <property type="resolution" value="3.60 A"/>
    <property type="chains" value="A/B=1-842"/>
</dbReference>
<dbReference type="PDB" id="8FWK">
    <property type="method" value="EM"/>
    <property type="resolution" value="3.50 A"/>
    <property type="chains" value="A/B=1-842"/>
</dbReference>
<dbReference type="PDB" id="8K7B">
    <property type="method" value="EM"/>
    <property type="resolution" value="3.90 A"/>
    <property type="chains" value="A/B=238-827"/>
</dbReference>
<dbReference type="PDB" id="8K7C">
    <property type="method" value="EM"/>
    <property type="resolution" value="3.90 A"/>
    <property type="chains" value="A/B=240-826"/>
</dbReference>
<dbReference type="PDB" id="8YR3">
    <property type="method" value="EM"/>
    <property type="resolution" value="3.20 A"/>
    <property type="chains" value="A/B=206-842"/>
</dbReference>
<dbReference type="PDB" id="8YR4">
    <property type="method" value="EM"/>
    <property type="resolution" value="3.10 A"/>
    <property type="chains" value="A/B=206-842"/>
</dbReference>
<dbReference type="PDB" id="9DBQ">
    <property type="method" value="EM"/>
    <property type="resolution" value="2.90 A"/>
    <property type="chains" value="A/B=1-842"/>
</dbReference>
<dbReference type="PDBsum" id="3NH6"/>
<dbReference type="PDBsum" id="3NH9"/>
<dbReference type="PDBsum" id="3NHA"/>
<dbReference type="PDBsum" id="3NHB"/>
<dbReference type="PDBsum" id="7D7N"/>
<dbReference type="PDBsum" id="7D7R"/>
<dbReference type="PDBsum" id="7DNY"/>
<dbReference type="PDBsum" id="7DNZ"/>
<dbReference type="PDBsum" id="7EKL"/>
<dbReference type="PDBsum" id="7EKM"/>
<dbReference type="PDBsum" id="8FWK"/>
<dbReference type="PDBsum" id="8K7B"/>
<dbReference type="PDBsum" id="8K7C"/>
<dbReference type="PDBsum" id="8YR3"/>
<dbReference type="PDBsum" id="8YR4"/>
<dbReference type="PDBsum" id="9DBQ"/>
<dbReference type="BMRB" id="Q9NP58"/>
<dbReference type="EMDB" id="EMD-29511"/>
<dbReference type="EMDB" id="EMD-30609"/>
<dbReference type="EMDB" id="EMD-30610"/>
<dbReference type="EMDB" id="EMD-30790"/>
<dbReference type="EMDB" id="EMD-30791"/>
<dbReference type="EMDB" id="EMD-31169"/>
<dbReference type="EMDB" id="EMD-31170"/>
<dbReference type="EMDB" id="EMD-36937"/>
<dbReference type="EMDB" id="EMD-36938"/>
<dbReference type="EMDB" id="EMD-39534"/>
<dbReference type="EMDB" id="EMD-39535"/>
<dbReference type="EMDB" id="EMD-46724"/>
<dbReference type="SMR" id="Q9NP58"/>
<dbReference type="BioGRID" id="115369">
    <property type="interactions" value="122"/>
</dbReference>
<dbReference type="FunCoup" id="Q9NP58">
    <property type="interactions" value="1471"/>
</dbReference>
<dbReference type="IntAct" id="Q9NP58">
    <property type="interactions" value="59"/>
</dbReference>
<dbReference type="MINT" id="Q9NP58"/>
<dbReference type="STRING" id="9606.ENSP00000265316"/>
<dbReference type="BindingDB" id="Q9NP58"/>
<dbReference type="ChEMBL" id="CHEMBL2007630"/>
<dbReference type="TCDB" id="3.A.1.210.6">
    <property type="family name" value="the atp-binding cassette (abc) superfamily"/>
</dbReference>
<dbReference type="GlyCosmos" id="Q9NP58">
    <property type="glycosylation" value="1 site, No reported glycans"/>
</dbReference>
<dbReference type="GlyGen" id="Q9NP58">
    <property type="glycosylation" value="5 sites, 1 O-linked glycan (1 site)"/>
</dbReference>
<dbReference type="iPTMnet" id="Q9NP58"/>
<dbReference type="PhosphoSitePlus" id="Q9NP58"/>
<dbReference type="SwissPalm" id="Q9NP58"/>
<dbReference type="BioMuta" id="ABCB6"/>
<dbReference type="DMDM" id="13123949"/>
<dbReference type="jPOST" id="Q9NP58"/>
<dbReference type="MassIVE" id="Q9NP58"/>
<dbReference type="PaxDb" id="9606-ENSP00000265316"/>
<dbReference type="PeptideAtlas" id="Q9NP58"/>
<dbReference type="ProteomicsDB" id="81888">
    <molecule id="Q9NP58-1"/>
</dbReference>
<dbReference type="ProteomicsDB" id="81889">
    <molecule id="Q9NP58-4"/>
</dbReference>
<dbReference type="Pumba" id="Q9NP58"/>
<dbReference type="Antibodypedia" id="20133">
    <property type="antibodies" value="188 antibodies from 29 providers"/>
</dbReference>
<dbReference type="DNASU" id="10058"/>
<dbReference type="Ensembl" id="ENST00000265316.9">
    <molecule id="Q9NP58-1"/>
    <property type="protein sequence ID" value="ENSP00000265316.3"/>
    <property type="gene ID" value="ENSG00000115657.14"/>
</dbReference>
<dbReference type="Ensembl" id="ENST00000295750.5">
    <molecule id="Q9NP58-4"/>
    <property type="protein sequence ID" value="ENSP00000295750.5"/>
    <property type="gene ID" value="ENSG00000115657.14"/>
</dbReference>
<dbReference type="GeneID" id="10058"/>
<dbReference type="KEGG" id="hsa:10058"/>
<dbReference type="MANE-Select" id="ENST00000265316.9">
    <property type="protein sequence ID" value="ENSP00000265316.3"/>
    <property type="RefSeq nucleotide sequence ID" value="NM_005689.4"/>
    <property type="RefSeq protein sequence ID" value="NP_005680.1"/>
</dbReference>
<dbReference type="UCSC" id="uc002vkc.3">
    <molecule id="Q9NP58-1"/>
    <property type="organism name" value="human"/>
</dbReference>
<dbReference type="AGR" id="HGNC:47"/>
<dbReference type="CTD" id="10058"/>
<dbReference type="DisGeNET" id="10058"/>
<dbReference type="GeneCards" id="ABCB6"/>
<dbReference type="HGNC" id="HGNC:47">
    <property type="gene designation" value="ABCB6"/>
</dbReference>
<dbReference type="HPA" id="ENSG00000115657">
    <property type="expression patterns" value="Low tissue specificity"/>
</dbReference>
<dbReference type="MalaCards" id="ABCB6"/>
<dbReference type="MIM" id="111600">
    <property type="type" value="phenotype"/>
</dbReference>
<dbReference type="MIM" id="605452">
    <property type="type" value="gene"/>
</dbReference>
<dbReference type="MIM" id="609153">
    <property type="type" value="phenotype"/>
</dbReference>
<dbReference type="MIM" id="614497">
    <property type="type" value="phenotype"/>
</dbReference>
<dbReference type="MIM" id="615402">
    <property type="type" value="phenotype"/>
</dbReference>
<dbReference type="neXtProt" id="NX_Q9NP58"/>
<dbReference type="OpenTargets" id="ENSG00000115657"/>
<dbReference type="Orphanet" id="98942">
    <property type="disease" value="Coloboma of choroid and retina"/>
</dbReference>
<dbReference type="Orphanet" id="98943">
    <property type="disease" value="Coloboma of eye lens"/>
</dbReference>
<dbReference type="Orphanet" id="98946">
    <property type="disease" value="Coloboma of eyelid"/>
</dbReference>
<dbReference type="Orphanet" id="98944">
    <property type="disease" value="Coloboma of iris"/>
</dbReference>
<dbReference type="Orphanet" id="98945">
    <property type="disease" value="Coloboma of macula"/>
</dbReference>
<dbReference type="Orphanet" id="98947">
    <property type="disease" value="Coloboma of optic disc"/>
</dbReference>
<dbReference type="Orphanet" id="98938">
    <property type="disease" value="Colobomatous microphthalmia"/>
</dbReference>
<dbReference type="Orphanet" id="241">
    <property type="disease" value="Dyschromatosis universalis hereditaria"/>
</dbReference>
<dbReference type="Orphanet" id="90044">
    <property type="disease" value="Familial pseudohyperkalemia"/>
</dbReference>
<dbReference type="PharmGKB" id="PA24388"/>
<dbReference type="VEuPathDB" id="HostDB:ENSG00000115657"/>
<dbReference type="eggNOG" id="KOG0056">
    <property type="taxonomic scope" value="Eukaryota"/>
</dbReference>
<dbReference type="GeneTree" id="ENSGT00940000156160"/>
<dbReference type="InParanoid" id="Q9NP58"/>
<dbReference type="OMA" id="YYGAEHY"/>
<dbReference type="OrthoDB" id="6500128at2759"/>
<dbReference type="PAN-GO" id="Q9NP58">
    <property type="GO annotations" value="6 GO annotations based on evolutionary models"/>
</dbReference>
<dbReference type="PhylomeDB" id="Q9NP58"/>
<dbReference type="TreeFam" id="TF105194"/>
<dbReference type="PathwayCommons" id="Q9NP58"/>
<dbReference type="Reactome" id="R-HSA-1369007">
    <property type="pathway name" value="Mitochondrial ABC transporters"/>
</dbReference>
<dbReference type="Reactome" id="R-HSA-5683371">
    <property type="pathway name" value="Defective ABCB6 causes MCOPCB7"/>
</dbReference>
<dbReference type="SABIO-RK" id="Q9NP58"/>
<dbReference type="SignaLink" id="Q9NP58"/>
<dbReference type="BioGRID-ORCS" id="10058">
    <property type="hits" value="12 hits in 1162 CRISPR screens"/>
</dbReference>
<dbReference type="ChiTaRS" id="ABCB6">
    <property type="organism name" value="human"/>
</dbReference>
<dbReference type="EvolutionaryTrace" id="Q9NP58"/>
<dbReference type="GeneWiki" id="ABCB6"/>
<dbReference type="GenomeRNAi" id="10058"/>
<dbReference type="Pharos" id="Q9NP58">
    <property type="development level" value="Tbio"/>
</dbReference>
<dbReference type="PRO" id="PR:Q9NP58"/>
<dbReference type="Proteomes" id="UP000005640">
    <property type="component" value="Chromosome 2"/>
</dbReference>
<dbReference type="RNAct" id="Q9NP58">
    <property type="molecule type" value="protein"/>
</dbReference>
<dbReference type="Bgee" id="ENSG00000115657">
    <property type="expression patterns" value="Expressed in right ovary and 96 other cell types or tissues"/>
</dbReference>
<dbReference type="ExpressionAtlas" id="Q9NP58">
    <property type="expression patterns" value="baseline and differential"/>
</dbReference>
<dbReference type="GO" id="GO:0043190">
    <property type="term" value="C:ATP-binding cassette (ABC) transporter complex"/>
    <property type="evidence" value="ECO:0000303"/>
    <property type="project" value="UniProtKB"/>
</dbReference>
<dbReference type="GO" id="GO:0005829">
    <property type="term" value="C:cytosol"/>
    <property type="evidence" value="ECO:0000314"/>
    <property type="project" value="HPA"/>
</dbReference>
<dbReference type="GO" id="GO:0031901">
    <property type="term" value="C:early endosome membrane"/>
    <property type="evidence" value="ECO:0000250"/>
    <property type="project" value="UniProtKB"/>
</dbReference>
<dbReference type="GO" id="GO:0036020">
    <property type="term" value="C:endolysosome membrane"/>
    <property type="evidence" value="ECO:0000314"/>
    <property type="project" value="UniProtKB"/>
</dbReference>
<dbReference type="GO" id="GO:0005783">
    <property type="term" value="C:endoplasmic reticulum"/>
    <property type="evidence" value="ECO:0000314"/>
    <property type="project" value="UniProtKB"/>
</dbReference>
<dbReference type="GO" id="GO:0005789">
    <property type="term" value="C:endoplasmic reticulum membrane"/>
    <property type="evidence" value="ECO:0000314"/>
    <property type="project" value="UniProtKB"/>
</dbReference>
<dbReference type="GO" id="GO:0005768">
    <property type="term" value="C:endosome"/>
    <property type="evidence" value="ECO:0000250"/>
    <property type="project" value="UniProtKB"/>
</dbReference>
<dbReference type="GO" id="GO:0070062">
    <property type="term" value="C:extracellular exosome"/>
    <property type="evidence" value="ECO:0000314"/>
    <property type="project" value="UniProtKB"/>
</dbReference>
<dbReference type="GO" id="GO:0005794">
    <property type="term" value="C:Golgi apparatus"/>
    <property type="evidence" value="ECO:0000314"/>
    <property type="project" value="HPA"/>
</dbReference>
<dbReference type="GO" id="GO:0000139">
    <property type="term" value="C:Golgi membrane"/>
    <property type="evidence" value="ECO:0007669"/>
    <property type="project" value="UniProtKB-SubCell"/>
</dbReference>
<dbReference type="GO" id="GO:0005765">
    <property type="term" value="C:lysosomal membrane"/>
    <property type="evidence" value="ECO:0000314"/>
    <property type="project" value="UniProtKB"/>
</dbReference>
<dbReference type="GO" id="GO:0033162">
    <property type="term" value="C:melanosome membrane"/>
    <property type="evidence" value="ECO:0000314"/>
    <property type="project" value="UniProtKB"/>
</dbReference>
<dbReference type="GO" id="GO:0005740">
    <property type="term" value="C:mitochondrial envelope"/>
    <property type="evidence" value="ECO:0000314"/>
    <property type="project" value="MGI"/>
</dbReference>
<dbReference type="GO" id="GO:0005741">
    <property type="term" value="C:mitochondrial outer membrane"/>
    <property type="evidence" value="ECO:0000314"/>
    <property type="project" value="UniProtKB"/>
</dbReference>
<dbReference type="GO" id="GO:0005739">
    <property type="term" value="C:mitochondrion"/>
    <property type="evidence" value="ECO:0000314"/>
    <property type="project" value="HPA"/>
</dbReference>
<dbReference type="GO" id="GO:0032585">
    <property type="term" value="C:multivesicular body membrane"/>
    <property type="evidence" value="ECO:0000314"/>
    <property type="project" value="UniProtKB"/>
</dbReference>
<dbReference type="GO" id="GO:0005654">
    <property type="term" value="C:nucleoplasm"/>
    <property type="evidence" value="ECO:0000314"/>
    <property type="project" value="HPA"/>
</dbReference>
<dbReference type="GO" id="GO:0005886">
    <property type="term" value="C:plasma membrane"/>
    <property type="evidence" value="ECO:0000314"/>
    <property type="project" value="HPA"/>
</dbReference>
<dbReference type="GO" id="GO:0005774">
    <property type="term" value="C:vacuolar membrane"/>
    <property type="evidence" value="ECO:0000318"/>
    <property type="project" value="GO_Central"/>
</dbReference>
<dbReference type="GO" id="GO:0015439">
    <property type="term" value="F:ABC-type heme transporter activity"/>
    <property type="evidence" value="ECO:0000315"/>
    <property type="project" value="UniProtKB"/>
</dbReference>
<dbReference type="GO" id="GO:0140359">
    <property type="term" value="F:ABC-type transporter activity"/>
    <property type="evidence" value="ECO:0000314"/>
    <property type="project" value="UniProtKB"/>
</dbReference>
<dbReference type="GO" id="GO:0005524">
    <property type="term" value="F:ATP binding"/>
    <property type="evidence" value="ECO:0000314"/>
    <property type="project" value="UniProtKB"/>
</dbReference>
<dbReference type="GO" id="GO:0016887">
    <property type="term" value="F:ATP hydrolysis activity"/>
    <property type="evidence" value="ECO:0000314"/>
    <property type="project" value="UniProtKB"/>
</dbReference>
<dbReference type="GO" id="GO:0015562">
    <property type="term" value="F:efflux transmembrane transporter activity"/>
    <property type="evidence" value="ECO:0000314"/>
    <property type="project" value="UniProtKB"/>
</dbReference>
<dbReference type="GO" id="GO:0020037">
    <property type="term" value="F:heme binding"/>
    <property type="evidence" value="ECO:0000314"/>
    <property type="project" value="UniProtKB"/>
</dbReference>
<dbReference type="GO" id="GO:0046906">
    <property type="term" value="F:tetrapyrrole binding"/>
    <property type="evidence" value="ECO:0000314"/>
    <property type="project" value="UniProtKB"/>
</dbReference>
<dbReference type="GO" id="GO:0007420">
    <property type="term" value="P:brain development"/>
    <property type="evidence" value="ECO:0000315"/>
    <property type="project" value="UniProtKB"/>
</dbReference>
<dbReference type="GO" id="GO:0098849">
    <property type="term" value="P:cellular detoxification of cadmium ion"/>
    <property type="evidence" value="ECO:0000314"/>
    <property type="project" value="UniProtKB"/>
</dbReference>
<dbReference type="GO" id="GO:0042168">
    <property type="term" value="P:heme metabolic process"/>
    <property type="evidence" value="ECO:0000314"/>
    <property type="project" value="UniProtKB"/>
</dbReference>
<dbReference type="GO" id="GO:0035351">
    <property type="term" value="P:heme transmembrane transport"/>
    <property type="evidence" value="ECO:0000314"/>
    <property type="project" value="UniProtKB"/>
</dbReference>
<dbReference type="GO" id="GO:0015886">
    <property type="term" value="P:heme transport"/>
    <property type="evidence" value="ECO:0000314"/>
    <property type="project" value="UniProtKB"/>
</dbReference>
<dbReference type="GO" id="GO:0006878">
    <property type="term" value="P:intracellular copper ion homeostasis"/>
    <property type="evidence" value="ECO:0000250"/>
    <property type="project" value="UniProtKB"/>
</dbReference>
<dbReference type="GO" id="GO:0006879">
    <property type="term" value="P:intracellular iron ion homeostasis"/>
    <property type="evidence" value="ECO:0000303"/>
    <property type="project" value="UniProtKB"/>
</dbReference>
<dbReference type="GO" id="GO:1903232">
    <property type="term" value="P:melanosome assembly"/>
    <property type="evidence" value="ECO:0000314"/>
    <property type="project" value="UniProtKB"/>
</dbReference>
<dbReference type="GO" id="GO:0006779">
    <property type="term" value="P:porphyrin-containing compound biosynthetic process"/>
    <property type="evidence" value="ECO:0000314"/>
    <property type="project" value="UniProtKB"/>
</dbReference>
<dbReference type="GO" id="GO:0006778">
    <property type="term" value="P:porphyrin-containing compound metabolic process"/>
    <property type="evidence" value="ECO:0000314"/>
    <property type="project" value="UniProtKB"/>
</dbReference>
<dbReference type="GO" id="GO:0043588">
    <property type="term" value="P:skin development"/>
    <property type="evidence" value="ECO:0000315"/>
    <property type="project" value="UniProtKB"/>
</dbReference>
<dbReference type="GO" id="GO:0033013">
    <property type="term" value="P:tetrapyrrole metabolic process"/>
    <property type="evidence" value="ECO:0000315"/>
    <property type="project" value="UniProtKB"/>
</dbReference>
<dbReference type="GO" id="GO:0055085">
    <property type="term" value="P:transmembrane transport"/>
    <property type="evidence" value="ECO:0000318"/>
    <property type="project" value="GO_Central"/>
</dbReference>
<dbReference type="CDD" id="cd18581">
    <property type="entry name" value="ABC_6TM_ABCB6"/>
    <property type="match status" value="1"/>
</dbReference>
<dbReference type="CDD" id="cd03253">
    <property type="entry name" value="ABCC_ATM1_transporter"/>
    <property type="match status" value="1"/>
</dbReference>
<dbReference type="FunFam" id="1.20.1560.10:FF:000022">
    <property type="entry name" value="ATP-binding cassette sub-family B member 6, mitochondrial"/>
    <property type="match status" value="1"/>
</dbReference>
<dbReference type="FunFam" id="3.40.50.300:FF:000186">
    <property type="entry name" value="ATP-binding cassette sub-family B member 7, mitochondrial"/>
    <property type="match status" value="1"/>
</dbReference>
<dbReference type="Gene3D" id="1.20.1560.10">
    <property type="entry name" value="ABC transporter type 1, transmembrane domain"/>
    <property type="match status" value="1"/>
</dbReference>
<dbReference type="Gene3D" id="3.40.50.300">
    <property type="entry name" value="P-loop containing nucleotide triphosphate hydrolases"/>
    <property type="match status" value="1"/>
</dbReference>
<dbReference type="InterPro" id="IPR003593">
    <property type="entry name" value="AAA+_ATPase"/>
</dbReference>
<dbReference type="InterPro" id="IPR011527">
    <property type="entry name" value="ABC1_TM_dom"/>
</dbReference>
<dbReference type="InterPro" id="IPR036640">
    <property type="entry name" value="ABC1_TM_sf"/>
</dbReference>
<dbReference type="InterPro" id="IPR003439">
    <property type="entry name" value="ABC_transporter-like_ATP-bd"/>
</dbReference>
<dbReference type="InterPro" id="IPR017871">
    <property type="entry name" value="ABC_transporter-like_CS"/>
</dbReference>
<dbReference type="InterPro" id="IPR032410">
    <property type="entry name" value="ABCB6_N"/>
</dbReference>
<dbReference type="InterPro" id="IPR027417">
    <property type="entry name" value="P-loop_NTPase"/>
</dbReference>
<dbReference type="InterPro" id="IPR039421">
    <property type="entry name" value="Type_1_exporter"/>
</dbReference>
<dbReference type="PANTHER" id="PTHR24221">
    <property type="entry name" value="ATP-BINDING CASSETTE SUB-FAMILY B"/>
    <property type="match status" value="1"/>
</dbReference>
<dbReference type="PANTHER" id="PTHR24221:SF654">
    <property type="entry name" value="ATP-BINDING CASSETTE SUB-FAMILY B MEMBER 6"/>
    <property type="match status" value="1"/>
</dbReference>
<dbReference type="Pfam" id="PF00664">
    <property type="entry name" value="ABC_membrane"/>
    <property type="match status" value="1"/>
</dbReference>
<dbReference type="Pfam" id="PF00005">
    <property type="entry name" value="ABC_tran"/>
    <property type="match status" value="1"/>
</dbReference>
<dbReference type="Pfam" id="PF16185">
    <property type="entry name" value="MTABC_N"/>
    <property type="match status" value="1"/>
</dbReference>
<dbReference type="SMART" id="SM00382">
    <property type="entry name" value="AAA"/>
    <property type="match status" value="1"/>
</dbReference>
<dbReference type="SUPFAM" id="SSF90123">
    <property type="entry name" value="ABC transporter transmembrane region"/>
    <property type="match status" value="1"/>
</dbReference>
<dbReference type="SUPFAM" id="SSF52540">
    <property type="entry name" value="P-loop containing nucleoside triphosphate hydrolases"/>
    <property type="match status" value="1"/>
</dbReference>
<dbReference type="PROSITE" id="PS50929">
    <property type="entry name" value="ABC_TM1F"/>
    <property type="match status" value="1"/>
</dbReference>
<dbReference type="PROSITE" id="PS00211">
    <property type="entry name" value="ABC_TRANSPORTER_1"/>
    <property type="match status" value="1"/>
</dbReference>
<dbReference type="PROSITE" id="PS50893">
    <property type="entry name" value="ABC_TRANSPORTER_2"/>
    <property type="match status" value="1"/>
</dbReference>
<gene>
    <name evidence="37" type="primary">ABCB6</name>
    <name evidence="31" type="synonym">MTABC3</name>
    <name type="synonym">PRP</name>
    <name type="synonym">UMAT</name>
</gene>
<reference key="1">
    <citation type="journal article" date="2000" name="J. Biol. Chem.">
        <title>MTABC3, a novel mitochondrial ATP-binding cassette protein involved in iron homeostasis.</title>
        <authorList>
            <person name="Mitsuhashi N."/>
            <person name="Miki T."/>
            <person name="Senbongi H."/>
            <person name="Yokoi N."/>
            <person name="Yano H."/>
            <person name="Miyazaki M."/>
            <person name="Nakajima N."/>
            <person name="Iwanaga T."/>
            <person name="Yokoyama Y."/>
            <person name="Shibata T."/>
            <person name="Seino S."/>
        </authorList>
    </citation>
    <scope>NUCLEOTIDE SEQUENCE [GENOMIC DNA / MRNA] (ISOFORM 1)</scope>
    <scope>FUNCTION</scope>
    <scope>TISSUE SPECIFICITY</scope>
    <scope>SUBCELLULAR LOCATION</scope>
</reference>
<reference key="2">
    <citation type="journal article" date="2002" name="Biochim. Biophys. Acta">
        <title>Isolation of a genomic clone containing the promoter region of the human ATP binding cassette (ABC) transporter, ABCB6.</title>
        <authorList>
            <person name="Emadi-Konjin H.-P."/>
            <person name="Zhang H."/>
            <person name="Anandan V."/>
            <person name="Sun D."/>
            <person name="Schuetz J.D."/>
            <person name="Furuya K.N."/>
        </authorList>
    </citation>
    <scope>NUCLEOTIDE SEQUENCE [MRNA] (ISOFORM 1)</scope>
    <scope>NUCLEOTIDE SEQUENCE [GENOMIC DNA] OF 1-229</scope>
    <source>
        <tissue>Colon</tissue>
        <tissue>Liver</tissue>
    </source>
</reference>
<reference key="3">
    <citation type="submission" date="2000-07" db="EMBL/GenBank/DDBJ databases">
        <title>Subcellular localization of the ABC transporter umat.</title>
        <authorList>
            <person name="Hirsch-Ernst K.I."/>
            <person name="Schaefer A."/>
            <person name="Ernst B.-P."/>
            <person name="Schmitz-Salue C."/>
            <person name="Awuah D."/>
            <person name="Kahl G.F."/>
        </authorList>
    </citation>
    <scope>NUCLEOTIDE SEQUENCE [MRNA] (ISOFORM 1)</scope>
</reference>
<reference key="4">
    <citation type="journal article" date="2004" name="Nat. Genet.">
        <title>Complete sequencing and characterization of 21,243 full-length human cDNAs.</title>
        <authorList>
            <person name="Ota T."/>
            <person name="Suzuki Y."/>
            <person name="Nishikawa T."/>
            <person name="Otsuki T."/>
            <person name="Sugiyama T."/>
            <person name="Irie R."/>
            <person name="Wakamatsu A."/>
            <person name="Hayashi K."/>
            <person name="Sato H."/>
            <person name="Nagai K."/>
            <person name="Kimura K."/>
            <person name="Makita H."/>
            <person name="Sekine M."/>
            <person name="Obayashi M."/>
            <person name="Nishi T."/>
            <person name="Shibahara T."/>
            <person name="Tanaka T."/>
            <person name="Ishii S."/>
            <person name="Yamamoto J."/>
            <person name="Saito K."/>
            <person name="Kawai Y."/>
            <person name="Isono Y."/>
            <person name="Nakamura Y."/>
            <person name="Nagahari K."/>
            <person name="Murakami K."/>
            <person name="Yasuda T."/>
            <person name="Iwayanagi T."/>
            <person name="Wagatsuma M."/>
            <person name="Shiratori A."/>
            <person name="Sudo H."/>
            <person name="Hosoiri T."/>
            <person name="Kaku Y."/>
            <person name="Kodaira H."/>
            <person name="Kondo H."/>
            <person name="Sugawara M."/>
            <person name="Takahashi M."/>
            <person name="Kanda K."/>
            <person name="Yokoi T."/>
            <person name="Furuya T."/>
            <person name="Kikkawa E."/>
            <person name="Omura Y."/>
            <person name="Abe K."/>
            <person name="Kamihara K."/>
            <person name="Katsuta N."/>
            <person name="Sato K."/>
            <person name="Tanikawa M."/>
            <person name="Yamazaki M."/>
            <person name="Ninomiya K."/>
            <person name="Ishibashi T."/>
            <person name="Yamashita H."/>
            <person name="Murakawa K."/>
            <person name="Fujimori K."/>
            <person name="Tanai H."/>
            <person name="Kimata M."/>
            <person name="Watanabe M."/>
            <person name="Hiraoka S."/>
            <person name="Chiba Y."/>
            <person name="Ishida S."/>
            <person name="Ono Y."/>
            <person name="Takiguchi S."/>
            <person name="Watanabe S."/>
            <person name="Yosida M."/>
            <person name="Hotuta T."/>
            <person name="Kusano J."/>
            <person name="Kanehori K."/>
            <person name="Takahashi-Fujii A."/>
            <person name="Hara H."/>
            <person name="Tanase T.-O."/>
            <person name="Nomura Y."/>
            <person name="Togiya S."/>
            <person name="Komai F."/>
            <person name="Hara R."/>
            <person name="Takeuchi K."/>
            <person name="Arita M."/>
            <person name="Imose N."/>
            <person name="Musashino K."/>
            <person name="Yuuki H."/>
            <person name="Oshima A."/>
            <person name="Sasaki N."/>
            <person name="Aotsuka S."/>
            <person name="Yoshikawa Y."/>
            <person name="Matsunawa H."/>
            <person name="Ichihara T."/>
            <person name="Shiohata N."/>
            <person name="Sano S."/>
            <person name="Moriya S."/>
            <person name="Momiyama H."/>
            <person name="Satoh N."/>
            <person name="Takami S."/>
            <person name="Terashima Y."/>
            <person name="Suzuki O."/>
            <person name="Nakagawa S."/>
            <person name="Senoh A."/>
            <person name="Mizoguchi H."/>
            <person name="Goto Y."/>
            <person name="Shimizu F."/>
            <person name="Wakebe H."/>
            <person name="Hishigaki H."/>
            <person name="Watanabe T."/>
            <person name="Sugiyama A."/>
            <person name="Takemoto M."/>
            <person name="Kawakami B."/>
            <person name="Yamazaki M."/>
            <person name="Watanabe K."/>
            <person name="Kumagai A."/>
            <person name="Itakura S."/>
            <person name="Fukuzumi Y."/>
            <person name="Fujimori Y."/>
            <person name="Komiyama M."/>
            <person name="Tashiro H."/>
            <person name="Tanigami A."/>
            <person name="Fujiwara T."/>
            <person name="Ono T."/>
            <person name="Yamada K."/>
            <person name="Fujii Y."/>
            <person name="Ozaki K."/>
            <person name="Hirao M."/>
            <person name="Ohmori Y."/>
            <person name="Kawabata A."/>
            <person name="Hikiji T."/>
            <person name="Kobatake N."/>
            <person name="Inagaki H."/>
            <person name="Ikema Y."/>
            <person name="Okamoto S."/>
            <person name="Okitani R."/>
            <person name="Kawakami T."/>
            <person name="Noguchi S."/>
            <person name="Itoh T."/>
            <person name="Shigeta K."/>
            <person name="Senba T."/>
            <person name="Matsumura K."/>
            <person name="Nakajima Y."/>
            <person name="Mizuno T."/>
            <person name="Morinaga M."/>
            <person name="Sasaki M."/>
            <person name="Togashi T."/>
            <person name="Oyama M."/>
            <person name="Hata H."/>
            <person name="Watanabe M."/>
            <person name="Komatsu T."/>
            <person name="Mizushima-Sugano J."/>
            <person name="Satoh T."/>
            <person name="Shirai Y."/>
            <person name="Takahashi Y."/>
            <person name="Nakagawa K."/>
            <person name="Okumura K."/>
            <person name="Nagase T."/>
            <person name="Nomura N."/>
            <person name="Kikuchi H."/>
            <person name="Masuho Y."/>
            <person name="Yamashita R."/>
            <person name="Nakai K."/>
            <person name="Yada T."/>
            <person name="Nakamura Y."/>
            <person name="Ohara O."/>
            <person name="Isogai T."/>
            <person name="Sugano S."/>
        </authorList>
    </citation>
    <scope>NUCLEOTIDE SEQUENCE [LARGE SCALE MRNA] (ISOFORM 2)</scope>
    <scope>NUCLEOTIDE SEQUENCE [LARGE SCALE MRNA] OF 112-842 (ISOFORM 1)</scope>
    <source>
        <tissue>Hepatoma</tissue>
        <tissue>Neuroepithelium</tissue>
    </source>
</reference>
<reference key="5">
    <citation type="submission" date="2005-03" db="EMBL/GenBank/DDBJ databases">
        <authorList>
            <person name="Totoki Y."/>
            <person name="Toyoda A."/>
            <person name="Takeda T."/>
            <person name="Sakaki Y."/>
            <person name="Tanaka A."/>
            <person name="Yokoyama S."/>
            <person name="Ohara O."/>
            <person name="Nagase T."/>
            <person name="Kikuno R.F."/>
        </authorList>
    </citation>
    <scope>NUCLEOTIDE SEQUENCE [LARGE SCALE MRNA] (ISOFORM 1)</scope>
    <source>
        <tissue>Brain</tissue>
    </source>
</reference>
<reference key="6">
    <citation type="journal article" date="2004" name="Genome Res.">
        <title>The status, quality, and expansion of the NIH full-length cDNA project: the Mammalian Gene Collection (MGC).</title>
        <authorList>
            <consortium name="The MGC Project Team"/>
        </authorList>
    </citation>
    <scope>NUCLEOTIDE SEQUENCE [LARGE SCALE MRNA] (ISOFORM 1)</scope>
    <source>
        <tissue>Brain</tissue>
    </source>
</reference>
<reference key="7">
    <citation type="submission" date="1998-06" db="EMBL/GenBank/DDBJ databases">
        <authorList>
            <person name="Yu W."/>
            <person name="Gibbs R.A."/>
        </authorList>
    </citation>
    <scope>NUCLEOTIDE SEQUENCE [LARGE SCALE MRNA] OF 332-842 (ISOFORM 1)</scope>
    <source>
        <tissue>Brain</tissue>
    </source>
</reference>
<reference key="8">
    <citation type="journal article" date="2006" name="Nature">
        <title>Identification of a mammalian mitochondrial porphyrin transporter.</title>
        <authorList>
            <person name="Krishnamurthy P.C."/>
            <person name="Du G."/>
            <person name="Fukuda Y."/>
            <person name="Sun D."/>
            <person name="Sampath J."/>
            <person name="Mercer K.E."/>
            <person name="Wang J."/>
            <person name="Sosa-Pineda B."/>
            <person name="Murti K.G."/>
            <person name="Schuetz J.D."/>
        </authorList>
    </citation>
    <scope>FUNCTION</scope>
    <scope>DEVELOPMENTAL STAGE</scope>
    <scope>INDUCTION BY CELLULAR PORPHYRINS</scope>
    <scope>SUBUNIT</scope>
    <scope>SUBCELLULAR LOCATION</scope>
    <scope>INTERACTION WITH HEMIN</scope>
    <scope>CATALYTIC ACTIVITY</scope>
</reference>
<reference key="9">
    <citation type="journal article" date="2007" name="Biochemistry">
        <title>Human ABCB6 localizes to both the outer mitochondrial membrane and the plasma membrane.</title>
        <authorList>
            <person name="Paterson J.K."/>
            <person name="Shukla S."/>
            <person name="Black C.M."/>
            <person name="Tachiwada T."/>
            <person name="Garfield S."/>
            <person name="Wincovitch S."/>
            <person name="Ernst D.N."/>
            <person name="Agadir A."/>
            <person name="Li X."/>
            <person name="Ambudkar S.V."/>
            <person name="Szakacs G."/>
            <person name="Akiyama S."/>
            <person name="Gottesman M.M."/>
        </authorList>
    </citation>
    <scope>SUBCELLULAR LOCATION</scope>
    <scope>FUNCTION</scope>
    <scope>CATALYTIC ACTIVITY</scope>
</reference>
<reference key="10">
    <citation type="journal article" date="2008" name="Biochem. Biophys. Res. Commun.">
        <title>Human ABC transporter isoform B6 (ABCB6) localizes primarily in the Golgi apparatus.</title>
        <authorList>
            <person name="Tsuchida M."/>
            <person name="Emi Y."/>
            <person name="Kida Y."/>
            <person name="Sakaguchi M."/>
        </authorList>
    </citation>
    <scope>SUBCELLULAR LOCATION</scope>
    <scope>GLYCOSYLATION</scope>
</reference>
<reference key="11">
    <citation type="journal article" date="2011" name="J. Biol. Chem.">
        <title>Conserved intramolecular disulfide bond is critical to trafficking and fate of ATP-binding cassette (ABC) transporters ABCB6 and sulfonylurea receptor 1 (SUR1)/ABCC8.</title>
        <authorList>
            <person name="Fukuda Y."/>
            <person name="Aguilar-Bryan L."/>
            <person name="Vaxillaire M."/>
            <person name="Dechaume A."/>
            <person name="Wang Y."/>
            <person name="Dean M."/>
            <person name="Moitra K."/>
            <person name="Bryan J."/>
            <person name="Schuetz J.D."/>
        </authorList>
    </citation>
    <scope>INDUCTION</scope>
    <scope>GLYCOSYLATION AT ASN-6</scope>
    <scope>SUBCELLULAR LOCATION</scope>
    <scope>MUTAGENESIS OF ASN-6; CYS-8; CYS-26; CYS-50; CYS-120; ASN-447; ASN-498; ASN-677 AND ASN-775</scope>
    <scope>DISULFIDE BOND</scope>
</reference>
<reference key="12">
    <citation type="journal article" date="2011" name="Toxicol. Sci.">
        <title>The ATP-binding cassette transporter ABCB6 is induced by arsenic and protects against arsenic cytotoxicity.</title>
        <authorList>
            <person name="Chavan H."/>
            <person name="Oruganti M."/>
            <person name="Krishnamurthy P."/>
        </authorList>
    </citation>
    <scope>FUNCTION</scope>
    <scope>INDUCTION</scope>
</reference>
<reference key="13">
    <citation type="journal article" date="2012" name="PLoS ONE">
        <title>Shifting the paradigm: the putative mitochondrial protein ABCB6 resides in the lysosomes of cells and in the plasma membrane of erythrocytes.</title>
        <authorList>
            <person name="Kiss K."/>
            <person name="Brozik A."/>
            <person name="Kucsma N."/>
            <person name="Toth A."/>
            <person name="Gera M."/>
            <person name="Berry L."/>
            <person name="Vallentin A."/>
            <person name="Vial H."/>
            <person name="Vidal M."/>
            <person name="Szakacs G."/>
        </authorList>
    </citation>
    <scope>SUBCELLULAR LOCATION</scope>
    <scope>GLYCOSYLATION</scope>
    <scope>INDUCTION</scope>
</reference>
<reference key="14">
    <citation type="journal article" date="2012" name="Am. J. Hum. Genet.">
        <title>ABCB6 mutations cause ocular coloboma.</title>
        <authorList>
            <person name="Wang L."/>
            <person name="He F."/>
            <person name="Bu J."/>
            <person name="Liu X."/>
            <person name="Du W."/>
            <person name="Dong J."/>
            <person name="Cooney J.D."/>
            <person name="Dubey S.K."/>
            <person name="Shi Y."/>
            <person name="Gong B."/>
            <person name="Li J."/>
            <person name="McBride P.F."/>
            <person name="Jia Y."/>
            <person name="Lu F."/>
            <person name="Soltis K.A."/>
            <person name="Lin Y."/>
            <person name="Namburi P."/>
            <person name="Liang C."/>
            <person name="Sundaresan P."/>
            <person name="Paw B.H."/>
            <person name="Li D.Y."/>
            <person name="Phillips J.D."/>
            <person name="Yang Z."/>
        </authorList>
    </citation>
    <scope>SUBCELLULAR LOCATION</scope>
    <scope>TISSUE SPECIFICITY</scope>
    <scope>VARIANTS MCOPCB7 THR-57 AND VAL-811</scope>
    <scope>CHARACTERIZATION OF VARIANTS MCOPCB7 THR-57 AND VAL-811</scope>
</reference>
<reference key="15">
    <citation type="journal article" date="2012" name="Nat. Genet.">
        <title>ABCB6 is dispensable for erythropoiesis and specifies the new blood group system Langereis.</title>
        <authorList>
            <person name="Helias V."/>
            <person name="Saison C."/>
            <person name="Ballif B.A."/>
            <person name="Peyrard T."/>
            <person name="Takahashi J."/>
            <person name="Takahashi H."/>
            <person name="Tanaka M."/>
            <person name="Deybach J.C."/>
            <person name="Puy H."/>
            <person name="Le Gall M."/>
            <person name="Sureau C."/>
            <person name="Pham B.N."/>
            <person name="Le Pennec P.Y."/>
            <person name="Tani Y."/>
            <person name="Cartron J.P."/>
            <person name="Arnaud L."/>
        </authorList>
    </citation>
    <scope>POLYMORPHISM</scope>
    <scope>INVOLVEMENT IN LANGEREIS BLOOD GROUP SYSTEM</scope>
    <scope>SUBCELLULAR LOCATION</scope>
</reference>
<reference key="16">
    <citation type="journal article" date="2013" name="Am. J. Hematol.">
        <title>Missense mutations in the ABCB6 transporter cause dominant familial pseudohyperkalemia.</title>
        <authorList>
            <person name="Andolfo I."/>
            <person name="Alper S.L."/>
            <person name="Delaunay J."/>
            <person name="Auriemma C."/>
            <person name="Russo R."/>
            <person name="Asci R."/>
            <person name="Esposito M.R."/>
            <person name="Sharma A.K."/>
            <person name="Shmukler B.E."/>
            <person name="Brugnara C."/>
            <person name="De Franceschi L."/>
            <person name="Iolascon A."/>
        </authorList>
    </citation>
    <scope>SUBCELLULAR LOCATION</scope>
    <scope>INDUCTION</scope>
    <scope>INVOLVEMENT IN PSHK2</scope>
    <scope>VARIANTS PSHK2 GLN-375 AND TRP-375</scope>
</reference>
<reference key="17">
    <citation type="journal article" date="2013" name="J. Biol. Chem.">
        <title>Efficient purification and reconstitution of ATP binding cassette transporter B6 (ABCB6) for functional and structural studies.</title>
        <authorList>
            <person name="Chavan H."/>
            <person name="Khan M.M."/>
            <person name="Tegos G."/>
            <person name="Krishnamurthy P."/>
        </authorList>
    </citation>
    <scope>SUBCELLULAR LOCATION</scope>
    <scope>SUBUNIT</scope>
    <scope>BIOPHYSICOCHEMICAL PROPERTIES</scope>
    <scope>ACTIVITY REGULATION</scope>
    <scope>CATALYTIC ACTIVITY</scope>
    <scope>FUNCTION</scope>
    <scope>MUTAGENESIS OF LYS-629</scope>
</reference>
<reference key="18">
    <citation type="journal article" date="2014" name="Anticancer Res.">
        <title>Expression of ABCB6 is related to resistance to 5-FU, SN-38 and vincristine.</title>
        <authorList>
            <person name="Minami K."/>
            <person name="Kamijo Y."/>
            <person name="Nishizawa Y."/>
            <person name="Tabata S."/>
            <person name="Horikuchi F."/>
            <person name="Yamamoto M."/>
            <person name="Kawahara K."/>
            <person name="Shinsato Y."/>
            <person name="Tachiwada T."/>
            <person name="Chen Z.S."/>
            <person name="Tsujikawa K."/>
            <person name="Nakagawa M."/>
            <person name="Seki N."/>
            <person name="Akiyama S."/>
            <person name="Arima K."/>
            <person name="Takeda Y."/>
            <person name="Furukawa T."/>
        </authorList>
    </citation>
    <scope>FUNCTION</scope>
</reference>
<reference key="19">
    <citation type="journal article" date="2014" name="J. Proteomics">
        <title>An enzyme assisted RP-RPLC approach for in-depth analysis of human liver phosphoproteome.</title>
        <authorList>
            <person name="Bian Y."/>
            <person name="Song C."/>
            <person name="Cheng K."/>
            <person name="Dong M."/>
            <person name="Wang F."/>
            <person name="Huang J."/>
            <person name="Sun D."/>
            <person name="Wang L."/>
            <person name="Ye M."/>
            <person name="Zou H."/>
        </authorList>
    </citation>
    <scope>IDENTIFICATION BY MASS SPECTROMETRY [LARGE SCALE ANALYSIS]</scope>
    <source>
        <tissue>Liver</tissue>
    </source>
</reference>
<reference key="20">
    <citation type="journal article" date="2015" name="Biochem. J.">
        <title>Role of the N-terminal transmembrane domain in the endo-lysosomal targeting and function of the human ABCB6 protein.</title>
        <authorList>
            <person name="Kiss K."/>
            <person name="Kucsma N."/>
            <person name="Brozik A."/>
            <person name="Tusnady G.E."/>
            <person name="Bergam P."/>
            <person name="van Niel G."/>
            <person name="Szakacs G."/>
        </authorList>
    </citation>
    <scope>MUTAGENESIS OF LYS-629</scope>
    <scope>SUBUNIT</scope>
    <scope>GLYCOSYLATION</scope>
    <scope>SUBCELLULAR LOCATION</scope>
    <scope>REGION</scope>
    <scope>DOMAIN</scope>
</reference>
<reference key="21">
    <citation type="journal article" date="2018" name="J. Mol. Biol.">
        <title>ABCB6 Resides in Melanosomes and Regulates Early Steps of Melanogenesis Required for PMEL Amyloid Matrix Formation.</title>
        <authorList>
            <person name="Bergam P."/>
            <person name="Reisecker J.M."/>
            <person name="Rakvacs Z."/>
            <person name="Kucsma N."/>
            <person name="Raposo G."/>
            <person name="Szakacs G."/>
            <person name="van Niel G."/>
        </authorList>
    </citation>
    <scope>SUBCELLULAR LOCATION</scope>
    <scope>FUNCTION</scope>
    <scope>MUTAGENESIS OF LYS-629</scope>
    <scope>CHARACTERIZATION OF VARIANT DUH3 GLU-579</scope>
</reference>
<reference key="22">
    <citation type="journal article" date="2019" name="Cell. Mol. Life Sci.">
        <title>The human ABCB6 protein is the functional homologue of HMT-1 proteins mediating cadmium detoxification.</title>
        <authorList>
            <person name="Rakvacs Z."/>
            <person name="Kucsma N."/>
            <person name="Gera M."/>
            <person name="Igriczi B."/>
            <person name="Kiss K."/>
            <person name="Barna J."/>
            <person name="Kovacs D."/>
            <person name="Vellai T."/>
            <person name="Bencs L."/>
            <person name="Reisecker J.M."/>
            <person name="Szoboszlai N."/>
            <person name="Szakacs G."/>
        </authorList>
    </citation>
    <scope>MUTAGENESIS OF LYS-629</scope>
    <scope>SUBCELLULAR LOCATION</scope>
    <scope>FUNCTION</scope>
</reference>
<reference key="23">
    <citation type="journal article" date="2014" name="Transfusion">
        <title>Familial pseudohyperkalemia in blood donors: a novel mutation with implications for transfusion practice.</title>
        <authorList>
            <person name="Bawazir W.M."/>
            <person name="Flatt J.F."/>
            <person name="Wallis J.P."/>
            <person name="Rendon A."/>
            <person name="Cardigan R.A."/>
            <person name="New H.V."/>
            <person name="Wiltshire M."/>
            <person name="Page L."/>
            <person name="Chapman C.E."/>
            <person name="Stewart G.W."/>
            <person name="Bruce L.J."/>
        </authorList>
    </citation>
    <scope>INVOLVEMENT IN PSHK2</scope>
    <scope>VARIANT PSHK2 GLN-723</scope>
</reference>
<reference key="24">
    <citation type="journal article" date="2006" name="J. Biomol. NMR">
        <title>Heteronuclear multidimensional NMR and homology modelling studies of the C-terminal nucleotide-binding domain of the human mitochondrial ABC transporter ABCB6.</title>
        <authorList>
            <person name="Kurashima-Ito K."/>
            <person name="Ikeya T."/>
            <person name="Senbongi H."/>
            <person name="Tochio H."/>
            <person name="Mikawa T."/>
            <person name="Shibata T."/>
            <person name="Ito Y."/>
        </authorList>
    </citation>
    <scope>STRUCTURE BY NMR OF 558-842 IN COMPLEX WITH ADP</scope>
</reference>
<reference key="25">
    <citation type="journal article" date="2010" name="Acta Crystallogr. D">
        <title>Structures of the nucleotide-binding domain of the human ABCB6 transporter and its complexes with nucleotides.</title>
        <authorList>
            <person name="Haffke M."/>
            <person name="Menzel A."/>
            <person name="Carius Y."/>
            <person name="Jahn D."/>
            <person name="Heinz D.W."/>
        </authorList>
    </citation>
    <scope>X-RAY CRYSTALLOGRAPHY (2.00 ANGSTROMS) OF 558-842 IN COMPLEXES WITH ADP; ATP AND PHOSPHATE</scope>
</reference>
<reference evidence="39 40" key="26">
    <citation type="journal article" date="2020" name="Protein Sci.">
        <title>Cryo-electron microscopy structure of human ABCB6 transporter.</title>
        <authorList>
            <person name="Wang C."/>
            <person name="Cao C."/>
            <person name="Wang N."/>
            <person name="Wang X."/>
            <person name="Wang X."/>
            <person name="Zhang X.C."/>
        </authorList>
    </citation>
    <scope>STRUCTURE BY ELECTRON MICROSCOPY (4.00 ANGSTROMS)</scope>
    <scope>SUBUNIT</scope>
    <scope>REGION</scope>
    <scope>MUTAGENESIS OF TYR-286; VAL-531; MET-542 AND TRP-546</scope>
    <scope>BIOPHYSICOCHEMICAL PROPERTIES</scope>
    <scope>ACTIVITY REGULATION</scope>
    <scope>FUNCTION</scope>
    <scope>CATALYTIC ACTIVITY</scope>
</reference>
<reference key="27">
    <citation type="journal article" date="2006" name="Science">
        <title>The consensus coding sequences of human breast and colorectal cancers.</title>
        <authorList>
            <person name="Sjoeblom T."/>
            <person name="Jones S."/>
            <person name="Wood L.D."/>
            <person name="Parsons D.W."/>
            <person name="Lin J."/>
            <person name="Barber T.D."/>
            <person name="Mandelker D."/>
            <person name="Leary R.J."/>
            <person name="Ptak J."/>
            <person name="Silliman N."/>
            <person name="Szabo S."/>
            <person name="Buckhaults P."/>
            <person name="Farrell C."/>
            <person name="Meeh P."/>
            <person name="Markowitz S.D."/>
            <person name="Willis J."/>
            <person name="Dawson D."/>
            <person name="Willson J.K.V."/>
            <person name="Gazdar A.F."/>
            <person name="Hartigan J."/>
            <person name="Wu L."/>
            <person name="Liu C."/>
            <person name="Parmigiani G."/>
            <person name="Park B.H."/>
            <person name="Bachman K.E."/>
            <person name="Papadopoulos N."/>
            <person name="Vogelstein B."/>
            <person name="Kinzler K.W."/>
            <person name="Velculescu V.E."/>
        </authorList>
    </citation>
    <scope>VARIANT [LARGE SCALE ANALYSIS] GLY-69</scope>
</reference>
<reference key="28">
    <citation type="journal article" date="2013" name="J. Invest. Dermatol.">
        <title>Mutations in ABCB6 cause dyschromatosis universalis hereditaria.</title>
        <authorList>
            <person name="Zhang C."/>
            <person name="Li D."/>
            <person name="Zhang J."/>
            <person name="Chen X."/>
            <person name="Huang M."/>
            <person name="Archacki S."/>
            <person name="Tian Y."/>
            <person name="Ren W."/>
            <person name="Mei A."/>
            <person name="Zhang Q."/>
            <person name="Fang M."/>
            <person name="Su Z."/>
            <person name="Yin Y."/>
            <person name="Liu D."/>
            <person name="Chen Y."/>
            <person name="Cui X."/>
            <person name="Li C."/>
            <person name="Yang H."/>
            <person name="Wang Q."/>
            <person name="Wang J."/>
            <person name="Liu M."/>
            <person name="Deng Y."/>
        </authorList>
    </citation>
    <scope>VARIANTS DUH3 GLY-170; PRO-356 AND GLU-579</scope>
    <scope>CHARACTERIZATION OF VARIANTS DUH3 GLY-170; PRO-356 AND GLU-579</scope>
</reference>
<reference key="29">
    <citation type="journal article" date="2013" name="PLoS ONE">
        <title>Novel mutations of ABCB6 associated with autosomal dominant dyschromatosis universalis hereditaria.</title>
        <authorList>
            <person name="Cui Y.X."/>
            <person name="Xia X.Y."/>
            <person name="Zhou Y."/>
            <person name="Gao L."/>
            <person name="Shang X.J."/>
            <person name="Ni T."/>
            <person name="Wang W.P."/>
            <person name="Fan X.B."/>
            <person name="Yin H.L."/>
            <person name="Jiang S.J."/>
            <person name="Yao B."/>
            <person name="Hu Y.A."/>
            <person name="Wang G."/>
            <person name="Li X.J."/>
        </authorList>
    </citation>
    <scope>VARIANT DUH3 LYS-555</scope>
</reference>
<reference key="30">
    <citation type="journal article" date="2014" name="J. Dermatol. Sci.">
        <title>Novel missense mutations of ABCB6 in two chinese families with dyschromatosis universalis hereditaria.</title>
        <authorList>
            <person name="Lu C."/>
            <person name="Liu J."/>
            <person name="Liu F."/>
            <person name="Liu Y."/>
            <person name="Ma D."/>
            <person name="Zhang X."/>
        </authorList>
    </citation>
    <scope>VARIANTS DUH3 ARG-322 AND HIS-424</scope>
</reference>
<reference key="31">
    <citation type="journal article" date="2014" name="PLoS ONE">
        <title>Genome-wide linkage, exome sequencing and functional analyses identify ABCB6 as the pathogenic gene of dyschromatosis universalis hereditaria.</title>
        <authorList>
            <person name="Liu H."/>
            <person name="Li Y."/>
            <person name="Hung K.K."/>
            <person name="Wang N."/>
            <person name="Wang C."/>
            <person name="Chen X."/>
            <person name="Sheng D."/>
            <person name="Fu X."/>
            <person name="See K."/>
            <person name="Foo J.N."/>
            <person name="Low H."/>
            <person name="Liany H."/>
            <person name="Irwan I.D."/>
            <person name="Liu J."/>
            <person name="Yang B."/>
            <person name="Chen M."/>
            <person name="Yu Y."/>
            <person name="Yu G."/>
            <person name="Niu G."/>
            <person name="You J."/>
            <person name="Zhou Y."/>
            <person name="Ma S."/>
            <person name="Wang T."/>
            <person name="Yan X."/>
            <person name="Goh B.K."/>
            <person name="Common J.E."/>
            <person name="Lane B.E."/>
            <person name="Sun Y."/>
            <person name="Zhou G."/>
            <person name="Lu X."/>
            <person name="Wang Z."/>
            <person name="Tian H."/>
            <person name="Cao Y."/>
            <person name="Chen S."/>
            <person name="Liu Q."/>
            <person name="Liu J."/>
            <person name="Zhang F."/>
        </authorList>
    </citation>
    <scope>VARIANT DUH3 VAL-453</scope>
</reference>
<reference key="32">
    <citation type="journal article" date="2016" name="Nat. Commun.">
        <title>The severity of hereditary porphyria is modulated by the porphyrin exporter and Lan antigen ABCB6.</title>
        <authorList>
            <person name="Fukuda Y."/>
            <person name="Cheong P.L."/>
            <person name="Lynch J."/>
            <person name="Brighton C."/>
            <person name="Frase S."/>
            <person name="Kargas V."/>
            <person name="Rampersaud E."/>
            <person name="Wang Y."/>
            <person name="Sankaran V.G."/>
            <person name="Yu B."/>
            <person name="Ney P.A."/>
            <person name="Weiss M.J."/>
            <person name="Vogel P."/>
            <person name="Bond P.J."/>
            <person name="Ford R.C."/>
            <person name="Trent R.J."/>
            <person name="Schuetz J.D."/>
        </authorList>
    </citation>
    <scope>VARIANTS GLN-192; TRP-276; THR-492; SER-521; SER-588 AND THR-681</scope>
    <scope>CHARACTERIZATION OF VARIANTS TRP-276; THR-492 AND SER-521</scope>
    <scope>CATALYTIC ACTIVITY</scope>
    <scope>FUNCTION</scope>
    <scope>SUBCELLULAR LOCATION</scope>
</reference>
<protein>
    <recommendedName>
        <fullName evidence="33">ATP-binding cassette sub-family B member 6</fullName>
    </recommendedName>
    <alternativeName>
        <fullName evidence="33">ABC-type heme transporter ABCB6</fullName>
        <ecNumber evidence="9 10">7.6.2.5</ecNumber>
    </alternativeName>
    <alternativeName>
        <fullName evidence="31">Mitochondrial ABC transporter 3</fullName>
        <shortName evidence="31">Mt-ABC transporter 3</shortName>
    </alternativeName>
    <alternativeName>
        <fullName>P-glycoprotein-related protein</fullName>
    </alternativeName>
    <alternativeName>
        <fullName>Ubiquitously-expressed mammalian ABC half transporter</fullName>
    </alternativeName>
</protein>
<name>ABCB6_HUMAN</name>
<sequence length="842" mass="93886">MVTVGNYCEAEGPVGPAWMQDGLSPCFFFTLVPSTRMALGTLALVLALPCRRRERPAGADSLSWGAGPRISPYVLQLLLATLQAALPLAGLAGRVGTARGAPLPSYLLLASVLESLAGACGLWLLVVERSQARQRLAMGIWIKFRHSPGLLLLWTVAFAAENLALVSWNSPQWWWARADLGQQVQFSLWVLRYVVSGGLFVLGLWAPGLRPQSYTLQVHEEDQDVERSQVRSAAQQSTWRDFGRKLRLLSGYLWPRGSPALQLVVLICLGLMGLERALNVLVPIFYRNIVNLLTEKAPWNSLAWTVTSYVFLKFLQGGGTGSTGFVSNLRTFLWIRVQQFTSRRVELLIFSHLHELSLRWHLGRRTGEVLRIADRGTSSVTGLLSYLVFNVIPTLADIIIGIIYFSMFFNAWFGLIVFLCMSLYLTLTIVVTEWRTKFRRAMNTQENATRARAVDSLLNFETVKYYNAESYEVERYREAIIKYQGLEWKSSASLVLLNQTQNLVIGLGLLAGSLLCAYFVTEQKLQVGDYVLFGTYIIQLYMPLNWFGTYYRMIQTNFIDMENMFDLLKEETEVKDLPGAGPLRFQKGRIEFENVHFSYADGRETLQDVSFTVMPGQTLALVGPSGAGKSTILRLLFRFYDISSGCIRIDGQDISQVTQASLRSHIGVVPQDTVLFNDTIADNIRYGRVTAGNDEVEAAAQAAGIHDAIMAFPEGYRTQVGERGLKLSGGEKQRVAIARTILKAPGIILLDEATSALDTSNERAIQASLAKVCANRTTIVVAHRLSTVVNADQILVIKDGCIVERGRHEALLSRGGVYADMWQLQQGQEETSEDTKPQTMER</sequence>
<organism>
    <name type="scientific">Homo sapiens</name>
    <name type="common">Human</name>
    <dbReference type="NCBI Taxonomy" id="9606"/>
    <lineage>
        <taxon>Eukaryota</taxon>
        <taxon>Metazoa</taxon>
        <taxon>Chordata</taxon>
        <taxon>Craniata</taxon>
        <taxon>Vertebrata</taxon>
        <taxon>Euteleostomi</taxon>
        <taxon>Mammalia</taxon>
        <taxon>Eutheria</taxon>
        <taxon>Euarchontoglires</taxon>
        <taxon>Primates</taxon>
        <taxon>Haplorrhini</taxon>
        <taxon>Catarrhini</taxon>
        <taxon>Hominidae</taxon>
        <taxon>Homo</taxon>
    </lineage>
</organism>
<evidence type="ECO:0000250" key="1">
    <source>
        <dbReference type="UniProtKB" id="O70595"/>
    </source>
</evidence>
<evidence type="ECO:0000250" key="2">
    <source>
        <dbReference type="UniProtKB" id="Q9DC29"/>
    </source>
</evidence>
<evidence type="ECO:0000255" key="3"/>
<evidence type="ECO:0000255" key="4">
    <source>
        <dbReference type="PROSITE-ProRule" id="PRU00434"/>
    </source>
</evidence>
<evidence type="ECO:0000255" key="5">
    <source>
        <dbReference type="PROSITE-ProRule" id="PRU00441"/>
    </source>
</evidence>
<evidence type="ECO:0000269" key="6">
    <source>
    </source>
</evidence>
<evidence type="ECO:0000269" key="7">
    <source>
    </source>
</evidence>
<evidence type="ECO:0000269" key="8">
    <source>
    </source>
</evidence>
<evidence type="ECO:0000269" key="9">
    <source>
    </source>
</evidence>
<evidence type="ECO:0000269" key="10">
    <source>
    </source>
</evidence>
<evidence type="ECO:0000269" key="11">
    <source>
    </source>
</evidence>
<evidence type="ECO:0000269" key="12">
    <source>
    </source>
</evidence>
<evidence type="ECO:0000269" key="13">
    <source>
    </source>
</evidence>
<evidence type="ECO:0000269" key="14">
    <source>
    </source>
</evidence>
<evidence type="ECO:0000269" key="15">
    <source>
    </source>
</evidence>
<evidence type="ECO:0000269" key="16">
    <source>
    </source>
</evidence>
<evidence type="ECO:0000269" key="17">
    <source>
    </source>
</evidence>
<evidence type="ECO:0000269" key="18">
    <source>
    </source>
</evidence>
<evidence type="ECO:0000269" key="19">
    <source>
    </source>
</evidence>
<evidence type="ECO:0000269" key="20">
    <source>
    </source>
</evidence>
<evidence type="ECO:0000269" key="21">
    <source>
    </source>
</evidence>
<evidence type="ECO:0000269" key="22">
    <source>
    </source>
</evidence>
<evidence type="ECO:0000269" key="23">
    <source>
    </source>
</evidence>
<evidence type="ECO:0000269" key="24">
    <source>
    </source>
</evidence>
<evidence type="ECO:0000269" key="25">
    <source>
    </source>
</evidence>
<evidence type="ECO:0000269" key="26">
    <source>
    </source>
</evidence>
<evidence type="ECO:0000269" key="27">
    <source>
    </source>
</evidence>
<evidence type="ECO:0000269" key="28">
    <source>
    </source>
</evidence>
<evidence type="ECO:0000269" key="29">
    <source>
    </source>
</evidence>
<evidence type="ECO:0000269" key="30">
    <source>
    </source>
</evidence>
<evidence type="ECO:0000303" key="31">
    <source>
    </source>
</evidence>
<evidence type="ECO:0000303" key="32">
    <source>
    </source>
</evidence>
<evidence type="ECO:0000305" key="33"/>
<evidence type="ECO:0000305" key="34">
    <source>
    </source>
</evidence>
<evidence type="ECO:0000305" key="35">
    <source>
    </source>
</evidence>
<evidence type="ECO:0000305" key="36">
    <source>
    </source>
</evidence>
<evidence type="ECO:0000312" key="37">
    <source>
        <dbReference type="HGNC" id="HGNC:47"/>
    </source>
</evidence>
<evidence type="ECO:0007744" key="38">
    <source>
        <dbReference type="PDB" id="3NH9"/>
    </source>
</evidence>
<evidence type="ECO:0007744" key="39">
    <source>
        <dbReference type="PDB" id="7D7N"/>
    </source>
</evidence>
<evidence type="ECO:0007744" key="40">
    <source>
        <dbReference type="PDB" id="7D7R"/>
    </source>
</evidence>
<evidence type="ECO:0007829" key="41">
    <source>
        <dbReference type="PDB" id="3NH6"/>
    </source>
</evidence>
<evidence type="ECO:0007829" key="42">
    <source>
        <dbReference type="PDB" id="3NH9"/>
    </source>
</evidence>
<evidence type="ECO:0007829" key="43">
    <source>
        <dbReference type="PDB" id="7DNY"/>
    </source>
</evidence>
<evidence type="ECO:0007829" key="44">
    <source>
        <dbReference type="PDB" id="7EKL"/>
    </source>
</evidence>
<evidence type="ECO:0007829" key="45">
    <source>
        <dbReference type="PDB" id="9DBQ"/>
    </source>
</evidence>
<accession>Q9NP58</accession>
<accession>O75542</accession>
<accession>Q49A66</accession>
<accession>Q59GQ5</accession>
<accession>Q6ZME6</accession>
<accession>Q96ME8</accession>
<accession>Q9HAQ6</accession>
<accession>Q9HAQ7</accession>
<keyword id="KW-0002">3D-structure</keyword>
<keyword id="KW-0025">Alternative splicing</keyword>
<keyword id="KW-0067">ATP-binding</keyword>
<keyword id="KW-1003">Cell membrane</keyword>
<keyword id="KW-0225">Disease variant</keyword>
<keyword id="KW-1015">Disulfide bond</keyword>
<keyword id="KW-1011">Dyskeratosis congenita</keyword>
<keyword id="KW-0256">Endoplasmic reticulum</keyword>
<keyword id="KW-0967">Endosome</keyword>
<keyword id="KW-0325">Glycoprotein</keyword>
<keyword id="KW-0333">Golgi apparatus</keyword>
<keyword id="KW-0458">Lysosome</keyword>
<keyword id="KW-0472">Membrane</keyword>
<keyword id="KW-1013">Microphthalmia</keyword>
<keyword id="KW-0496">Mitochondrion</keyword>
<keyword id="KW-1000">Mitochondrion outer membrane</keyword>
<keyword id="KW-0547">Nucleotide-binding</keyword>
<keyword id="KW-1267">Proteomics identification</keyword>
<keyword id="KW-1185">Reference proteome</keyword>
<keyword id="KW-0964">Secreted</keyword>
<keyword id="KW-1278">Translocase</keyword>
<keyword id="KW-0812">Transmembrane</keyword>
<keyword id="KW-1133">Transmembrane helix</keyword>
<keyword id="KW-0813">Transport</keyword>
<proteinExistence type="evidence at protein level"/>
<feature type="chain" id="PRO_0000000248" description="ATP-binding cassette sub-family B member 6">
    <location>
        <begin position="1"/>
        <end position="842"/>
    </location>
</feature>
<feature type="topological domain" description="Lumenal" evidence="35 36">
    <location>
        <begin position="1"/>
        <end position="26"/>
    </location>
</feature>
<feature type="transmembrane region" description="Helical" evidence="3">
    <location>
        <begin position="27"/>
        <end position="47"/>
    </location>
</feature>
<feature type="topological domain" description="Cytoplasmic" evidence="33">
    <location>
        <begin position="48"/>
        <end position="72"/>
    </location>
</feature>
<feature type="transmembrane region" description="Helical" evidence="3">
    <location>
        <begin position="73"/>
        <end position="93"/>
    </location>
</feature>
<feature type="topological domain" description="Lumenal" evidence="35 36">
    <location>
        <begin position="94"/>
        <end position="106"/>
    </location>
</feature>
<feature type="transmembrane region" description="Helical" evidence="3">
    <location>
        <begin position="107"/>
        <end position="127"/>
    </location>
</feature>
<feature type="topological domain" description="Cytoplasmic" evidence="33">
    <location>
        <begin position="128"/>
        <end position="147"/>
    </location>
</feature>
<feature type="transmembrane region" description="Helical" evidence="3">
    <location>
        <begin position="148"/>
        <end position="168"/>
    </location>
</feature>
<feature type="topological domain" description="Lumenal" evidence="35 36">
    <location>
        <begin position="169"/>
        <end position="185"/>
    </location>
</feature>
<feature type="transmembrane region" description="Helical" evidence="3">
    <location>
        <begin position="186"/>
        <end position="206"/>
    </location>
</feature>
<feature type="topological domain" description="Cytoplasmic" evidence="33">
    <location>
        <begin position="207"/>
        <end position="263"/>
    </location>
</feature>
<feature type="transmembrane region" description="Helical" evidence="3 5">
    <location>
        <begin position="264"/>
        <end position="284"/>
    </location>
</feature>
<feature type="topological domain" description="Lumenal" evidence="35 36">
    <location>
        <begin position="285"/>
        <end position="291"/>
    </location>
</feature>
<feature type="transmembrane region" description="Helical" evidence="3 5">
    <location>
        <begin position="292"/>
        <end position="312"/>
    </location>
</feature>
<feature type="topological domain" description="Cytoplasmic" evidence="33">
    <location>
        <begin position="313"/>
        <end position="375"/>
    </location>
</feature>
<feature type="transmembrane region" description="Helical" evidence="3 5">
    <location>
        <begin position="376"/>
        <end position="396"/>
    </location>
</feature>
<feature type="topological domain" description="Lumenal" evidence="35 36">
    <location>
        <position position="397"/>
    </location>
</feature>
<feature type="transmembrane region" description="Helical" evidence="3 5">
    <location>
        <begin position="398"/>
        <end position="418"/>
    </location>
</feature>
<feature type="topological domain" description="Cytoplasmic" evidence="33">
    <location>
        <begin position="419"/>
        <end position="499"/>
    </location>
</feature>
<feature type="transmembrane region" description="Helical" evidence="3 5">
    <location>
        <begin position="500"/>
        <end position="520"/>
    </location>
</feature>
<feature type="topological domain" description="Lumenal" evidence="35 36">
    <location>
        <begin position="521"/>
        <end position="529"/>
    </location>
</feature>
<feature type="transmembrane region" description="Helical" evidence="3 5">
    <location>
        <begin position="530"/>
        <end position="550"/>
    </location>
</feature>
<feature type="topological domain" description="Cytoplasmic" evidence="33">
    <location>
        <begin position="551"/>
        <end position="842"/>
    </location>
</feature>
<feature type="domain" description="ABC transmembrane type-1" evidence="5">
    <location>
        <begin position="265"/>
        <end position="556"/>
    </location>
</feature>
<feature type="domain" description="ABC transporter" evidence="4">
    <location>
        <begin position="590"/>
        <end position="824"/>
    </location>
</feature>
<feature type="region of interest" description="Required for ATPase activity" evidence="30">
    <location>
        <begin position="1"/>
        <end position="236"/>
    </location>
</feature>
<feature type="region of interest" description="Required for the lysosomal targeting" evidence="26">
    <location>
        <begin position="1"/>
        <end position="205"/>
    </location>
</feature>
<feature type="binding site" evidence="12 38">
    <location>
        <position position="599"/>
    </location>
    <ligand>
        <name>ATP</name>
        <dbReference type="ChEBI" id="CHEBI:30616"/>
    </ligand>
</feature>
<feature type="binding site" evidence="12 38">
    <location>
        <begin position="623"/>
        <end position="634"/>
    </location>
    <ligand>
        <name>ATP</name>
        <dbReference type="ChEBI" id="CHEBI:30616"/>
    </ligand>
</feature>
<feature type="glycosylation site" description="N-linked (GlcNAc...) asparagine" evidence="13">
    <location>
        <position position="6"/>
    </location>
</feature>
<feature type="disulfide bond" evidence="13">
    <location>
        <begin position="8"/>
        <end position="26"/>
    </location>
</feature>
<feature type="splice variant" id="VSP_021973" description="In isoform 2." evidence="32">
    <location>
        <begin position="183"/>
        <end position="228"/>
    </location>
</feature>
<feature type="sequence variant" id="VAR_067394" description="In MCOPCB7; uncertain significance; hypomorphic mutation; dbSNP:rs387906911." evidence="15">
    <original>A</original>
    <variation>T</variation>
    <location>
        <position position="57"/>
    </location>
</feature>
<feature type="sequence variant" id="VAR_035732" description="In a breast cancer sample; somatic mutation." evidence="8">
    <original>R</original>
    <variation>G</variation>
    <location>
        <position position="69"/>
    </location>
</feature>
<feature type="sequence variant" id="VAR_070602" description="In DUH3; the protein is retained in the Golgi apparatus; dbSNP:rs397514757." evidence="19">
    <original>S</original>
    <variation>G</variation>
    <location>
        <position position="170"/>
    </location>
</feature>
<feature type="sequence variant" id="VAR_084494" description="Decrease expression; does not affect substrate binding; does not affect ATP-binding; loss of plasma membrane expression; dbSNP:rs150221689." evidence="27">
    <original>R</original>
    <variation>Q</variation>
    <location>
        <position position="192"/>
    </location>
</feature>
<feature type="sequence variant" id="VAR_084495" description="May be a modifier of disease severity in porphyria patients; loss of expression; dbSNP:rs57467915." evidence="27">
    <original>R</original>
    <variation>W</variation>
    <location>
        <position position="276"/>
    </location>
</feature>
<feature type="sequence variant" id="VAR_047552" description="In dbSNP:rs13018440.">
    <original>L</original>
    <variation>V</variation>
    <location>
        <position position="293"/>
    </location>
</feature>
<feature type="sequence variant" id="VAR_073973" description="In DUH3; dbSNP:rs1574815954." evidence="25">
    <original>S</original>
    <variation>R</variation>
    <location>
        <position position="322"/>
    </location>
</feature>
<feature type="sequence variant" id="VAR_060986" description="In dbSNP:rs60322991.">
    <original>R</original>
    <variation>Q</variation>
    <location>
        <position position="343"/>
    </location>
</feature>
<feature type="sequence variant" id="VAR_070603" description="In DUH3; the protein is retained in the Golgi apparatus; dbSNP:rs397514756." evidence="19">
    <original>L</original>
    <variation>P</variation>
    <location>
        <position position="356"/>
    </location>
</feature>
<feature type="sequence variant" id="VAR_071133" description="In PSHK2; dbSNP:rs754667801." evidence="18">
    <original>R</original>
    <variation>Q</variation>
    <location>
        <position position="375"/>
    </location>
</feature>
<feature type="sequence variant" id="VAR_071134" description="In PSHK2; dbSNP:rs764893806." evidence="18">
    <original>R</original>
    <variation>W</variation>
    <location>
        <position position="375"/>
    </location>
</feature>
<feature type="sequence variant" id="VAR_073974" description="In DUH3." evidence="25">
    <original>Y</original>
    <variation>H</variation>
    <location>
        <position position="424"/>
    </location>
</feature>
<feature type="sequence variant" id="VAR_071135" description="In DUH3." evidence="22">
    <original>A</original>
    <variation>V</variation>
    <location>
        <position position="453"/>
    </location>
</feature>
<feature type="sequence variant" id="VAR_084496" description="May be a modifier of disease severity in porphyria patients; increases expression; does not affect substrate binding; impairs ATP-binding; Loss of ATP-dependent coproporphyrin III transport; Highly decrease plasma membrane expression; dbSNP:rs147445258." evidence="27">
    <original>A</original>
    <variation>T</variation>
    <location>
        <position position="492"/>
    </location>
</feature>
<feature type="sequence variant" id="VAR_084497" description="May be a modifier of disease severity in porphyria patients; loss of expression; dbSNP:rs149363094." evidence="27">
    <original>T</original>
    <variation>S</variation>
    <location>
        <position position="521"/>
    </location>
</feature>
<feature type="sequence variant" id="VAR_071136" description="In DUH3; dbSNP:rs796065353." evidence="21">
    <original>Q</original>
    <variation>K</variation>
    <location>
        <position position="555"/>
    </location>
</feature>
<feature type="sequence variant" id="VAR_070604" description="In DUH3; the protein is retained in the Golgi apparatus. Does not affect subcellular location in early melanosome and lysosome. Does not rescue the normal amyloid fibril formation and normal maturation of pigmented melanosomes. Does not influence trafficking of melanosomal proteins.; dbSNP:rs397514758." evidence="19 28">
    <original>G</original>
    <variation>E</variation>
    <location>
        <position position="579"/>
    </location>
</feature>
<feature type="sequence variant" id="VAR_084498" description="May be a modifier of disease severity in porphyria patients; loss of expression; dbSNP:rs145526996." evidence="27">
    <original>G</original>
    <variation>S</variation>
    <location>
        <position position="588"/>
    </location>
</feature>
<feature type="sequence variant" id="VAR_029749" description="In dbSNP:rs13402964.">
    <original>R</original>
    <variation>Q</variation>
    <location>
        <position position="648"/>
    </location>
</feature>
<feature type="sequence variant" id="VAR_084499" description="May be a modifier of disease severity in porphyria patients; loss of expression; dbSNP:rs142421126." evidence="27">
    <original>A</original>
    <variation>T</variation>
    <location>
        <position position="681"/>
    </location>
</feature>
<feature type="sequence variant" id="VAR_076206" description="In PSHK2; dbSNP:rs148211042." evidence="23">
    <original>R</original>
    <variation>Q</variation>
    <location>
        <position position="723"/>
    </location>
</feature>
<feature type="sequence variant" id="VAR_067395" description="In MCOPCB7; hypomorphic mutation; dbSNP:rs387906910." evidence="15">
    <original>L</original>
    <variation>V</variation>
    <location>
        <position position="811"/>
    </location>
</feature>
<feature type="mutagenesis site" description="Loss of N-glycosylation. Loss of N-glycosylation; when associated with Q-447; Q-498; Q-677 and Q-775. Does not affect substrate binding." evidence="13">
    <original>N</original>
    <variation>Q</variation>
    <location>
        <position position="6"/>
    </location>
</feature>
<feature type="mutagenesis site" description="Loss of N-glycosylation." evidence="13">
    <original>C</original>
    <variation>G</variation>
    <location>
        <position position="8"/>
    </location>
</feature>
<feature type="mutagenesis site" description="Does not affect substrate binding. Does not affect N-glycosylation. Impairs endoplasmic reticulum exit. Impairs endoplasmic reticulum exit; when associated with C-8. Increases ABCB6 proteasomal degradation. Affects protein stability. Does not affect migration in the presence of DTT; when associated with A-50 and A-120." evidence="13">
    <original>C</original>
    <variation>S</variation>
    <location>
        <position position="8"/>
    </location>
</feature>
<feature type="mutagenesis site" description="Decreases protein expression. Affects protein stability. Loss of ability to stimulate porphyrin synthesis." evidence="13">
    <original>C</original>
    <variation>A</variation>
    <location>
        <position position="26"/>
    </location>
</feature>
<feature type="mutagenesis site" description="Decreases protein expression. Impairs endoplasmic reticulum exit; when associated with C-8. Affects protein stability." evidence="13">
    <original>C</original>
    <variation>S</variation>
    <location>
        <position position="26"/>
    </location>
</feature>
<feature type="mutagenesis site" description="Increases migration in the absence of DTT; when associated with A-120. Reduces migration in with the presence of DTT; when associated with A-120." evidence="13">
    <original>C</original>
    <variation>A</variation>
    <location>
        <position position="50"/>
    </location>
</feature>
<feature type="mutagenesis site" description="Increases migration in the absence of DTT; when associated with A-50. Reduces migration in with the presence of DTT; when associated with A-50." evidence="13">
    <original>C</original>
    <variation>A</variation>
    <location>
        <position position="120"/>
    </location>
</feature>
<feature type="mutagenesis site" description="Loss of substrate-stimulate ATPase activity. Impairs protein expression." evidence="30">
    <original>Y</original>
    <variation>A</variation>
    <location>
        <position position="286"/>
    </location>
</feature>
<feature type="mutagenesis site" description="Does not affect N-glycosylation. Does not affect N-glycosylation; when associated with Q-498; Q-677 and Q-775. Does not affect trafficking from endoplasmic reticulum; when associated with Q-498; Q-677 and Q-775." evidence="13">
    <original>N</original>
    <variation>Q</variation>
    <location>
        <position position="447"/>
    </location>
</feature>
<feature type="mutagenesis site" description="Does not affect N-glycosylation. Does not affect N-glycosylation; when associated with Q-447; Q-677 and Q-775. Does not affect trafficking from endoplasmic reticulum; when associated with Q-447; Q-677 and Q-775." evidence="13">
    <original>N</original>
    <variation>Q</variation>
    <location>
        <position position="498"/>
    </location>
</feature>
<feature type="mutagenesis site" description="Loss of substrate-stimulate ATPase activity. Impairs protein expression." evidence="30">
    <original>V</original>
    <variation>A</variation>
    <location>
        <position position="531"/>
    </location>
</feature>
<feature type="mutagenesis site" description="Loss of substrate-stimulate ATPase activity." evidence="30">
    <original>M</original>
    <variation>A</variation>
    <location>
        <position position="542"/>
    </location>
</feature>
<feature type="mutagenesis site" description="Loss of substrate-stimulate ATPase activity. Impairs protein expression." evidence="30">
    <original>W</original>
    <variation>A</variation>
    <location>
        <position position="546"/>
    </location>
</feature>
<feature type="mutagenesis site" description="Does not affect substrate-stimulate ATPase activity." evidence="30">
    <original>W</original>
    <variation>F</variation>
    <location>
        <position position="546"/>
    </location>
</feature>
<feature type="mutagenesis site" description="Loss of substrate-stimulate ATPase activity. Impairs protein expression." evidence="30">
    <original>W</original>
    <variation>V</variation>
    <location>
        <position position="546"/>
    </location>
</feature>
<feature type="mutagenesis site" description="Abolishes ATP hydrolysis. Abolishes coproporphyrin III transport." evidence="20 26">
    <original>K</original>
    <variation>A</variation>
    <location>
        <position position="629"/>
    </location>
</feature>
<feature type="mutagenesis site" description="Does not affect subcellular location in early melanosome and lysosome. Does not rescue the normal amyloid fibril formation and normal maturation of pigmented melanosomes. Does not influence trafficking of melanosomal proteins. Fails to rescue vacuolar sequestration of cadmium in Schizosaccharomyces pombe and Caenorhabditis elegans strains defective for HMT-1. Fails to rescue the cadmium tolerance in Schizosaccharomyces pombe and Caenorhabditis elegans strains defective for HMT-1. Does not rescue vacuolar cadmium levels in hmt-1 mutant S.pombe." evidence="28 29">
    <original>K</original>
    <variation>M</variation>
    <location>
        <position position="629"/>
    </location>
</feature>
<feature type="mutagenesis site" description="Does not affect N-glycosylation. Does not affect N-glycosylation; when associated with Q-447; Q-498; and Q-775. Does not affect trafficking from endoplasmic reticulum; when associated with Q-447; Q-498; and Q-775." evidence="13">
    <original>N</original>
    <variation>Q</variation>
    <location>
        <position position="677"/>
    </location>
</feature>
<feature type="mutagenesis site" description="Does not affect N-glycosylation. Does not affect N-glycosylation; when associated with Q-447; Q-498 and Q-677. Does not affect trafficking from endoplasmic reticulum; when associated with Q-447; Q-498 and Q-677." evidence="13">
    <original>N</original>
    <variation>Q</variation>
    <location>
        <position position="775"/>
    </location>
</feature>
<feature type="sequence conflict" description="In Ref. 2; AAG33618." evidence="33" ref="2">
    <original>S</original>
    <variation>N</variation>
    <location>
        <position position="170"/>
    </location>
</feature>
<feature type="sequence conflict" description="In Ref. 4; BAD18782." evidence="33" ref="4">
    <original>T</original>
    <variation>S</variation>
    <location>
        <position position="320"/>
    </location>
</feature>
<feature type="sequence conflict" description="In Ref. 4; BAD18782." evidence="33" ref="4">
    <original>F</original>
    <variation>S</variation>
    <location>
        <position position="413"/>
    </location>
</feature>
<feature type="sequence conflict" description="In Ref. 4; BAD18782." evidence="33" ref="4">
    <original>G</original>
    <variation>E</variation>
    <location>
        <position position="616"/>
    </location>
</feature>
<feature type="sequence conflict" description="In Ref. 4; BAD18782." evidence="33" ref="4">
    <original>R</original>
    <variation>L</variation>
    <location>
        <position position="638"/>
    </location>
</feature>
<feature type="helix" evidence="45">
    <location>
        <begin position="238"/>
        <end position="253"/>
    </location>
</feature>
<feature type="helix" evidence="45">
    <location>
        <begin position="259"/>
        <end position="294"/>
    </location>
</feature>
<feature type="helix" evidence="45">
    <location>
        <begin position="299"/>
        <end position="316"/>
    </location>
</feature>
<feature type="strand" evidence="45">
    <location>
        <begin position="319"/>
        <end position="322"/>
    </location>
</feature>
<feature type="helix" evidence="45">
    <location>
        <begin position="325"/>
        <end position="355"/>
    </location>
</feature>
<feature type="helix" evidence="45">
    <location>
        <begin position="358"/>
        <end position="363"/>
    </location>
</feature>
<feature type="helix" evidence="45">
    <location>
        <begin position="366"/>
        <end position="389"/>
    </location>
</feature>
<feature type="helix" evidence="45">
    <location>
        <begin position="391"/>
        <end position="408"/>
    </location>
</feature>
<feature type="helix" evidence="45">
    <location>
        <begin position="411"/>
        <end position="458"/>
    </location>
</feature>
<feature type="helix" evidence="45">
    <location>
        <begin position="460"/>
        <end position="466"/>
    </location>
</feature>
<feature type="helix" evidence="45">
    <location>
        <begin position="469"/>
        <end position="521"/>
    </location>
</feature>
<feature type="helix" evidence="45">
    <location>
        <begin position="527"/>
        <end position="541"/>
    </location>
</feature>
<feature type="helix" evidence="45">
    <location>
        <begin position="542"/>
        <end position="546"/>
    </location>
</feature>
<feature type="helix" evidence="44">
    <location>
        <begin position="547"/>
        <end position="549"/>
    </location>
</feature>
<feature type="helix" evidence="41">
    <location>
        <begin position="561"/>
        <end position="572"/>
    </location>
</feature>
<feature type="strand" evidence="41">
    <location>
        <begin position="590"/>
        <end position="600"/>
    </location>
</feature>
<feature type="strand" evidence="43">
    <location>
        <begin position="601"/>
        <end position="603"/>
    </location>
</feature>
<feature type="strand" evidence="41">
    <location>
        <begin position="604"/>
        <end position="613"/>
    </location>
</feature>
<feature type="strand" evidence="41">
    <location>
        <begin position="618"/>
        <end position="625"/>
    </location>
</feature>
<feature type="helix" evidence="41">
    <location>
        <begin position="628"/>
        <end position="636"/>
    </location>
</feature>
<feature type="strand" evidence="41">
    <location>
        <begin position="643"/>
        <end position="649"/>
    </location>
</feature>
<feature type="helix" evidence="42">
    <location>
        <begin position="654"/>
        <end position="656"/>
    </location>
</feature>
<feature type="helix" evidence="41">
    <location>
        <begin position="659"/>
        <end position="664"/>
    </location>
</feature>
<feature type="strand" evidence="41">
    <location>
        <begin position="666"/>
        <end position="669"/>
    </location>
</feature>
<feature type="strand" evidence="41">
    <location>
        <begin position="677"/>
        <end position="679"/>
    </location>
</feature>
<feature type="helix" evidence="41">
    <location>
        <begin position="680"/>
        <end position="685"/>
    </location>
</feature>
<feature type="strand" evidence="43">
    <location>
        <begin position="689"/>
        <end position="691"/>
    </location>
</feature>
<feature type="helix" evidence="41">
    <location>
        <begin position="693"/>
        <end position="702"/>
    </location>
</feature>
<feature type="helix" evidence="41">
    <location>
        <begin position="706"/>
        <end position="711"/>
    </location>
</feature>
<feature type="strand" evidence="44">
    <location>
        <begin position="712"/>
        <end position="714"/>
    </location>
</feature>
<feature type="helix" evidence="41">
    <location>
        <begin position="715"/>
        <end position="717"/>
    </location>
</feature>
<feature type="strand" evidence="41">
    <location>
        <begin position="719"/>
        <end position="721"/>
    </location>
</feature>
<feature type="helix" evidence="44">
    <location>
        <begin position="722"/>
        <end position="724"/>
    </location>
</feature>
<feature type="turn" evidence="44">
    <location>
        <begin position="725"/>
        <end position="727"/>
    </location>
</feature>
<feature type="helix" evidence="41">
    <location>
        <begin position="729"/>
        <end position="743"/>
    </location>
</feature>
<feature type="strand" evidence="41">
    <location>
        <begin position="746"/>
        <end position="751"/>
    </location>
</feature>
<feature type="strand" evidence="44">
    <location>
        <begin position="753"/>
        <end position="757"/>
    </location>
</feature>
<feature type="helix" evidence="41">
    <location>
        <begin position="759"/>
        <end position="773"/>
    </location>
</feature>
<feature type="strand" evidence="41">
    <location>
        <begin position="776"/>
        <end position="781"/>
    </location>
</feature>
<feature type="helix" evidence="41">
    <location>
        <begin position="785"/>
        <end position="789"/>
    </location>
</feature>
<feature type="strand" evidence="41">
    <location>
        <begin position="792"/>
        <end position="798"/>
    </location>
</feature>
<feature type="strand" evidence="41">
    <location>
        <begin position="801"/>
        <end position="806"/>
    </location>
</feature>
<feature type="helix" evidence="41">
    <location>
        <begin position="808"/>
        <end position="814"/>
    </location>
</feature>
<feature type="helix" evidence="41">
    <location>
        <begin position="817"/>
        <end position="826"/>
    </location>
</feature>
<comment type="function">
    <text evidence="1 6 9 10 14 20 24 27 28 29 30">ATP-dependent transporter that catalyzes the transport of a broad-spectrum of porphyrins from the cytoplasm to the extracellular space through the plasma membrane or into the vesicle lumen (PubMed:17661442, PubMed:23792964, PubMed:27507172, PubMed:33007128). May also function as an ATP-dependent importer of porphyrins from the cytoplasm into the mitochondria, in turn may participate in the de novo heme biosynthesis regulation and in the coordination of heme and iron homeostasis during phenylhydrazine stress (PubMed:10837493, PubMed:17006453, PubMed:23792964, PubMed:33007128). May also play a key role in the early steps of melanogenesis producing PMEL amyloid fibrils (PubMed:29940187). In vitro, it confers to cells a resistance to toxic metal such as arsenic and cadmium and against chemotherapeutics agent such as 5-fluorouracil, SN-38 and vincristin (PubMed:21266531, PubMed:25202056, PubMed:31053883). In addition may play a role in the transition metal homeostasis (By similarity).</text>
</comment>
<comment type="catalytic activity">
    <reaction evidence="9 10 20">
        <text>heme b(in) + ATP + H2O = heme b(out) + ADP + phosphate + H(+)</text>
        <dbReference type="Rhea" id="RHEA:19261"/>
        <dbReference type="ChEBI" id="CHEBI:15377"/>
        <dbReference type="ChEBI" id="CHEBI:15378"/>
        <dbReference type="ChEBI" id="CHEBI:30616"/>
        <dbReference type="ChEBI" id="CHEBI:43474"/>
        <dbReference type="ChEBI" id="CHEBI:60344"/>
        <dbReference type="ChEBI" id="CHEBI:456216"/>
        <dbReference type="EC" id="7.6.2.5"/>
    </reaction>
    <physiologicalReaction direction="left-to-right" evidence="9 34">
        <dbReference type="Rhea" id="RHEA:19262"/>
    </physiologicalReaction>
</comment>
<comment type="catalytic activity">
    <reaction evidence="20 27 30">
        <text>coproporphyrin III(in) + ATP + H2O = coproporphyrin III(out) + ADP + phosphate + H(+)</text>
        <dbReference type="Rhea" id="RHEA:66664"/>
        <dbReference type="ChEBI" id="CHEBI:15377"/>
        <dbReference type="ChEBI" id="CHEBI:15378"/>
        <dbReference type="ChEBI" id="CHEBI:30616"/>
        <dbReference type="ChEBI" id="CHEBI:43474"/>
        <dbReference type="ChEBI" id="CHEBI:131725"/>
        <dbReference type="ChEBI" id="CHEBI:456216"/>
    </reaction>
    <physiologicalReaction direction="left-to-right" evidence="20 27">
        <dbReference type="Rhea" id="RHEA:66665"/>
    </physiologicalReaction>
</comment>
<comment type="catalytic activity">
    <reaction evidence="10 20">
        <text>pheophorbide a(in) + ATP + H2O = pheophorbide a(out) + ADP + phosphate + H(+)</text>
        <dbReference type="Rhea" id="RHEA:61360"/>
        <dbReference type="ChEBI" id="CHEBI:15377"/>
        <dbReference type="ChEBI" id="CHEBI:15378"/>
        <dbReference type="ChEBI" id="CHEBI:30616"/>
        <dbReference type="ChEBI" id="CHEBI:43474"/>
        <dbReference type="ChEBI" id="CHEBI:58687"/>
        <dbReference type="ChEBI" id="CHEBI:456216"/>
    </reaction>
    <physiologicalReaction direction="left-to-right" evidence="34">
        <dbReference type="Rhea" id="RHEA:61361"/>
    </physiologicalReaction>
</comment>
<comment type="catalytic activity">
    <reaction evidence="2">
        <text>coproporphyrinogen III(in) + ATP + H2O = coproporphyrinogen III(out) + ADP + phosphate + H(+)</text>
        <dbReference type="Rhea" id="RHEA:66680"/>
        <dbReference type="ChEBI" id="CHEBI:15377"/>
        <dbReference type="ChEBI" id="CHEBI:15378"/>
        <dbReference type="ChEBI" id="CHEBI:30616"/>
        <dbReference type="ChEBI" id="CHEBI:43474"/>
        <dbReference type="ChEBI" id="CHEBI:57309"/>
        <dbReference type="ChEBI" id="CHEBI:456216"/>
    </reaction>
    <physiologicalReaction direction="left-to-right" evidence="2">
        <dbReference type="Rhea" id="RHEA:66681"/>
    </physiologicalReaction>
</comment>
<comment type="catalytic activity">
    <reaction evidence="20 30">
        <text>protoporphyrin IX(in) + ATP + H2O = protoporphyrin IX(out) + ADP + phosphate + H(+)</text>
        <dbReference type="Rhea" id="RHEA:61336"/>
        <dbReference type="ChEBI" id="CHEBI:15377"/>
        <dbReference type="ChEBI" id="CHEBI:15378"/>
        <dbReference type="ChEBI" id="CHEBI:30616"/>
        <dbReference type="ChEBI" id="CHEBI:43474"/>
        <dbReference type="ChEBI" id="CHEBI:57306"/>
        <dbReference type="ChEBI" id="CHEBI:456216"/>
    </reaction>
    <physiologicalReaction direction="left-to-right" evidence="20">
        <dbReference type="Rhea" id="RHEA:61337"/>
    </physiologicalReaction>
</comment>
<comment type="catalytic activity">
    <reaction evidence="2">
        <text>coproporphyrin I(in) + ATP + H2O = coproporphyrin I(out) + ADP + phosphate + H(+)</text>
        <dbReference type="Rhea" id="RHEA:66768"/>
        <dbReference type="ChEBI" id="CHEBI:15377"/>
        <dbReference type="ChEBI" id="CHEBI:15378"/>
        <dbReference type="ChEBI" id="CHEBI:30616"/>
        <dbReference type="ChEBI" id="CHEBI:43474"/>
        <dbReference type="ChEBI" id="CHEBI:167478"/>
        <dbReference type="ChEBI" id="CHEBI:456216"/>
    </reaction>
    <physiologicalReaction direction="left-to-right" evidence="2">
        <dbReference type="Rhea" id="RHEA:66769"/>
    </physiologicalReaction>
</comment>
<comment type="catalytic activity">
    <reaction evidence="2">
        <text>uroporphyrin I(in) + ATP + H2O = uroporphyrin I(out) + ADP + phosphate + H(+)</text>
        <dbReference type="Rhea" id="RHEA:66772"/>
        <dbReference type="ChEBI" id="CHEBI:15377"/>
        <dbReference type="ChEBI" id="CHEBI:15378"/>
        <dbReference type="ChEBI" id="CHEBI:30616"/>
        <dbReference type="ChEBI" id="CHEBI:43474"/>
        <dbReference type="ChEBI" id="CHEBI:167480"/>
        <dbReference type="ChEBI" id="CHEBI:456216"/>
    </reaction>
    <physiologicalReaction direction="left-to-right" evidence="2">
        <dbReference type="Rhea" id="RHEA:66773"/>
    </physiologicalReaction>
</comment>
<comment type="catalytic activity">
    <reaction evidence="2">
        <text>uroporphyrin III(in) + ATP + H2O = uroporphyrin III(out) + ADP + phosphate + H(+)</text>
        <dbReference type="Rhea" id="RHEA:66776"/>
        <dbReference type="ChEBI" id="CHEBI:15377"/>
        <dbReference type="ChEBI" id="CHEBI:15378"/>
        <dbReference type="ChEBI" id="CHEBI:30616"/>
        <dbReference type="ChEBI" id="CHEBI:43474"/>
        <dbReference type="ChEBI" id="CHEBI:167479"/>
        <dbReference type="ChEBI" id="CHEBI:456216"/>
    </reaction>
    <physiologicalReaction direction="left-to-right" evidence="2">
        <dbReference type="Rhea" id="RHEA:66777"/>
    </physiologicalReaction>
</comment>
<comment type="activity regulation">
    <text evidence="20 30">ATPase activity is inhibited by MgATP with an IC(50) of 1.03 mM and up-regulated by coporphyrin III&gt; hemin &gt; protoporphyrin IX (PubMed:23792964). ATPase activity for hemin is up-regulated by glutathione (PubMed:33007128). The ATPase activity is impaired by increasing copper concentrations (0-300 uM) (PubMed:33007128). The ATPase activity is stimulated in presence of glutathione for increasing copper concentrations (0-300 uM) (PubMed:33007128).</text>
</comment>
<comment type="biophysicochemical properties">
    <kinetics>
        <KM evidence="20">0.99 mM for ATP (from purified mitochondrial ABCB6)</KM>
        <KM evidence="20">0.97 mM for ATP (from liposome-reconstituted purified mitochondrial ABCB6)</KM>
        <KM evidence="20">11.97 uM for coproporphyrin III (from liposome-reconstituted purified mitochondrial ABCB6)</KM>
        <KM evidence="30">51 uM for glutathione (in the presence of 10 uM of hemin)</KM>
        <KM evidence="30">190 nM for hemin (in the presence of 1 mM of glutathione)</KM>
        <KM evidence="30">600 nM for hematin (in the presence of 1 mM of glutathione)</KM>
        <KM evidence="30">148 nM for Fe-coproporphyrin III (in the presence of 1 mM of glutathione)</KM>
        <Vmax evidence="20">492.3 nmol/min/mg enzyme toward ATP (from purified mitochondrial ABCB6)</Vmax>
        <Vmax evidence="20">614.0 nmol/min/mg enzyme toward ATP (from liposome-reconstituted purified mitochondrial ABCB6)</Vmax>
        <Vmax evidence="20">29.6 pmol/min/mg enzyme toward coproporphyrin III (from liposome-reconstituted purified mitochondrial ABCB6)</Vmax>
        <Vmax evidence="20">5.13 pmol/min/mg enzyme toward verteporfin</Vmax>
        <Vmax evidence="20">2.7 pmol/min/mg enzyme toward tomatine</Vmax>
    </kinetics>
</comment>
<comment type="subunit">
    <text evidence="7 9 20 26 30">Homodimer.</text>
</comment>
<comment type="subcellular location">
    <subcellularLocation>
        <location evidence="10 16 17 18 27">Cell membrane</location>
        <topology evidence="3">Multi-pass membrane protein</topology>
    </subcellularLocation>
    <subcellularLocation>
        <location evidence="9 10">Mitochondrion outer membrane</location>
        <topology evidence="3">Multi-pass membrane protein</topology>
    </subcellularLocation>
    <subcellularLocation>
        <location evidence="11 13 15">Endoplasmic reticulum membrane</location>
        <topology evidence="3">Multi-pass membrane protein</topology>
    </subcellularLocation>
    <subcellularLocation>
        <location evidence="11 13 15">Golgi apparatus membrane</location>
        <topology evidence="3">Multi-pass membrane protein</topology>
    </subcellularLocation>
    <subcellularLocation>
        <location evidence="26">Endosome membrane</location>
        <topology evidence="3">Multi-pass membrane protein</topology>
    </subcellularLocation>
    <subcellularLocation>
        <location evidence="17 26 28 29">Lysosome membrane</location>
    </subcellularLocation>
    <subcellularLocation>
        <location evidence="1">Late endosome membrane</location>
    </subcellularLocation>
    <subcellularLocation>
        <location evidence="1">Early endosome membrane</location>
    </subcellularLocation>
    <subcellularLocation>
        <location evidence="17">Secreted</location>
        <location evidence="17">Extracellular exosome</location>
    </subcellularLocation>
    <subcellularLocation>
        <location evidence="6 20">Mitochondrion</location>
    </subcellularLocation>
    <subcellularLocation>
        <location evidence="26">Endosome</location>
        <location evidence="26">Multivesicular body membrane</location>
    </subcellularLocation>
    <subcellularLocation>
        <location evidence="28">Melanosome membrane</location>
    </subcellularLocation>
    <text evidence="1 11 13 17 26 28">Present in the membrane of mature erythrocytes and in exosomes released from reticulocytes during the final steps of erythroid maturation (PubMed:22655043). Traffics from endoplasmic reticulum to Golgi during its glycans's maturation, therefrom is first targeted to the plasma membrane, and is rapidly internalized through endocytosis to be distributed to the limiting membrane of multivesicular bodies and lysosomes (PubMed:18279659, PubMed:21199866, PubMed:25627919). Localized on the limiting membrane of early melanosomes of pigment cells (PubMed:29940187). Targeted to the endolysosomal compartment (By similarity).</text>
</comment>
<comment type="alternative products">
    <event type="alternative splicing"/>
    <isoform>
        <id>Q9NP58-1</id>
        <name>1</name>
        <sequence type="displayed"/>
    </isoform>
    <isoform>
        <id>Q9NP58-4</id>
        <name>2</name>
        <sequence type="described" ref="VSP_021973"/>
    </isoform>
</comment>
<comment type="tissue specificity">
    <text evidence="6 15 17">Widely expressed. High expression is detected in the retinal epithelium (PubMed:10837493, PubMed:22226084). Expressed in mature erythrocytes (PubMed:22655043).</text>
</comment>
<comment type="developmental stage">
    <text evidence="9">Highly expressed in fetal liver.</text>
</comment>
<comment type="induction">
    <text evidence="9 14 17 18">Up-regulated by cellular porphyrins (at protein level) (PubMed:17006453, PubMed:22655043, PubMed:23180570). Up-regulated during erythroid differentiation (at protein level) (PubMed:22655043). Induced by sodium arsenite in a dose-dependent manner (PubMed:21266531).</text>
</comment>
<comment type="domain">
    <text evidence="26">Contains two independently folding units, the N-terminal transmembrane domain (residues 1-205) and the ABC-core domain (206-842) are respectively responsible for the lysosomal targeting and the ATPase activity.</text>
</comment>
<comment type="PTM">
    <text evidence="11 13 17 26">N-glycosylated.</text>
</comment>
<comment type="polymorphism">
    <text evidence="16">Genetic variations in ABCB6 define the Langereis blood group system (LAN) [MIM:111600]. Individuals with Lan(-) blood group lack the Lan antigen on their red blood cells. These individuals may have anti-Lan antibodies in their serum, which can cause transfusion reactions or hemolytic disease of the fetus or newborn. The Lan(-) blood group is only clinically significant in transfusion settings or during pregnancy; otherwise Lan(-) individuals have no clinical features.</text>
</comment>
<comment type="disease" evidence="15">
    <disease id="DI-03384">
        <name>Microphthalmia/Coloboma 7</name>
        <acronym>MCOPCB7</acronym>
        <description>A disorder of eye formation, ranging from small size of a single eye to complete bilateral absence of ocular tissues. Ocular abnormalities like opacities of the cornea and lens, scaring of the retina and choroid, and other abnormalities may also be present. Ocular colobomas are a set of malformations resulting from abnormal morphogenesis of the optic cup and stalk, and the fusion of the fetal fissure (optic fissure).</description>
        <dbReference type="MIM" id="614497"/>
    </disease>
    <text>The disease is caused by variants affecting the gene represented in this entry.</text>
</comment>
<comment type="disease" evidence="19 21 22 25 28">
    <disease id="DI-03880">
        <name>Dyschromatosis universalis hereditaria 3</name>
        <acronym>DUH3</acronym>
        <description>An autosomal dominant pigmentary genodermatosis characterized by a mixture of hyperpigmented and hypopigmented macules distributed randomly over the body, that appear in infancy or early childhood. The trunk and extremities are the dominant sites of abnormal pigmentation. Facial lesions can be seen in 50% of affected individuals, but involvement of palms and soles is unusual. Abnormalities of hair and nails have also been reported. Dyschromatosis universalis hereditaria may be associated with abnormalities of dermal connective tissue, nerve tissue, or other systemic complications.</description>
        <dbReference type="MIM" id="615402"/>
    </disease>
    <text>The disease is caused by variants affecting the gene represented in this entry.</text>
</comment>
<comment type="disease" evidence="18 23">
    <disease id="DI-04131">
        <name>Pseudohyperkalemia, familial, 2, due to red cell leak</name>
        <acronym>PSHK2</acronym>
        <description>A dominantly inherited condition characterized by increased serum potassium levels, measured in whole-blood specimens stored at or below room temperature. This condition is not accompanied by clinical symptoms or biological signs except for borderline abnormalities of red cell shape.</description>
        <dbReference type="MIM" id="609153"/>
    </disease>
    <text>The disease is caused by variants affecting the gene represented in this entry.</text>
</comment>
<comment type="disease">
    <text evidence="27">Defects in ABCB6 may be the cause of a severe porphyria. Affected individuals show higher urinary porphyrin concentrations.</text>
</comment>
<comment type="similarity">
    <text evidence="33">Belongs to the ABC transporter superfamily. ABCB family. Heavy Metal importer (TC 3.A.1.210) subfamily.</text>
</comment>
<comment type="caution">
    <text evidence="6 9 10 17 26 28 29">To date, the intracellular localization of ABCB6 is a matter of debate, with conflicting reports suggesting mitochondrial (PubMed:10837493, PubMed:17006453, PubMed:17661442) or endolysosomal localization (PubMed:22655043, PubMed:25627919, PubMed:29940187, PubMed:31053883), therefore questioning the requirement of ABCB6 in the mitochondrial import of porphyrins.</text>
</comment>
<comment type="sequence caution" evidence="33">
    <conflict type="erroneous initiation">
        <sequence resource="EMBL-CDS" id="AAG33617"/>
    </conflict>
    <text>Extended N-terminus.</text>
</comment>
<comment type="sequence caution" evidence="33">
    <conflict type="erroneous initiation">
        <sequence resource="EMBL-CDS" id="AAG33618"/>
    </conflict>
    <text>Extended N-terminus.</text>
</comment>
<comment type="sequence caution" evidence="33">
    <conflict type="miscellaneous discrepancy">
        <sequence resource="EMBL-CDS" id="AAH43423"/>
    </conflict>
    <text>Intron retention.</text>
</comment>
<comment type="sequence caution" evidence="33">
    <conflict type="erroneous termination">
        <sequence resource="EMBL-CDS" id="BAD18782"/>
    </conflict>
    <text>Truncated C-terminus.</text>
</comment>
<comment type="sequence caution" evidence="33">
    <conflict type="miscellaneous discrepancy">
        <sequence resource="EMBL-CDS" id="BAD92291"/>
    </conflict>
    <text>Chimeric cDNA.</text>
</comment>
<comment type="sequence caution" evidence="33">
    <molecule>Isoform 2</molecule>
    <conflict type="miscellaneous discrepancy">
        <sequence resource="EMBL-CDS" id="BAB71347"/>
    </conflict>
    <text>splicing through aberrant splice sites.</text>
</comment>
<comment type="online information" name="ABCMdb">
    <link uri="http://abcm2.hegelab.org/search"/>
    <text>Database for mutations in ABC proteins</text>
</comment>